<sequence>MPPPRTGRGLLWLGLVLSSVCVALGSETQANSTTDALNVLLIIVDDLRPSLGCYGDKLVRSPNIDQLASHSLLFQNAFAQQAVCAPSRVSFLTGRRPDTTRLYDFNSYWRVHAGNFSTIPQYFKENGYVTMSVGKVFHPGISSNHTDDSPYSWSFPPYHPSSEKYENTKTCRGPDGELHANLLCPVDVLDVPEGTLPDKQSTEQAIQLLEKMKTSASPFFLAVGYHKPHIPFRYPKEFQKLYPLENITLAPDPEVPDGLPPVAYNPWMDIRQREDVQALNISVPYGPIPVDFQRKIRQSYFASVSYLDTQVGRLLSALDDLQLANSTIIAFTSDHGWALGEHGEWAKYSNFDVATHVPLIFYVPGRTASLPEAGEKLFPYLDPFDSASQLMEPGRQSMDLVELVSLFPTLAGLAGLQVPPRCPVPSFHVELCREGKNLLKHFRFRDLEEDPYLPGNPRELIAYSQYPRPSDIPQWNSDKPSLKDIKIMGYSIRTIDYRYTVWVGFNPDEFLANFSDIHAGELYFVDSDPLQDHNMYNDSQGGDLFQLLMP</sequence>
<organism>
    <name type="scientific">Homo sapiens</name>
    <name type="common">Human</name>
    <dbReference type="NCBI Taxonomy" id="9606"/>
    <lineage>
        <taxon>Eukaryota</taxon>
        <taxon>Metazoa</taxon>
        <taxon>Chordata</taxon>
        <taxon>Craniata</taxon>
        <taxon>Vertebrata</taxon>
        <taxon>Euteleostomi</taxon>
        <taxon>Mammalia</taxon>
        <taxon>Eutheria</taxon>
        <taxon>Euarchontoglires</taxon>
        <taxon>Primates</taxon>
        <taxon>Haplorrhini</taxon>
        <taxon>Catarrhini</taxon>
        <taxon>Hominidae</taxon>
        <taxon>Homo</taxon>
    </lineage>
</organism>
<feature type="signal peptide" evidence="2">
    <location>
        <begin position="1"/>
        <end position="25"/>
    </location>
</feature>
<feature type="propeptide" id="PRO_0000033428" evidence="17">
    <location>
        <begin position="26"/>
        <end position="33"/>
    </location>
</feature>
<feature type="chain" id="PRO_0000033429" description="Iduronate 2-sulfatase 42 kDa chain">
    <location>
        <begin position="34"/>
        <end position="455"/>
    </location>
</feature>
<feature type="chain" id="PRO_0000033430" description="Iduronate 2-sulfatase 14 kDa chain">
    <location>
        <begin position="456"/>
        <end position="550"/>
    </location>
</feature>
<feature type="active site" description="Nucleophile" evidence="43">
    <location>
        <position position="84"/>
    </location>
</feature>
<feature type="active site" evidence="1">
    <location>
        <position position="138"/>
    </location>
</feature>
<feature type="binding site" evidence="43 47">
    <location>
        <position position="45"/>
    </location>
    <ligand>
        <name>Ca(2+)</name>
        <dbReference type="ChEBI" id="CHEBI:29108"/>
    </ligand>
</feature>
<feature type="binding site" evidence="14 47">
    <location>
        <position position="46"/>
    </location>
    <ligand>
        <name>Ca(2+)</name>
        <dbReference type="ChEBI" id="CHEBI:29108"/>
    </ligand>
</feature>
<feature type="binding site" description="via 3-oxoalanine" evidence="43 47">
    <location>
        <position position="84"/>
    </location>
    <ligand>
        <name>Ca(2+)</name>
        <dbReference type="ChEBI" id="CHEBI:29108"/>
    </ligand>
</feature>
<feature type="binding site" evidence="43 47">
    <location>
        <position position="334"/>
    </location>
    <ligand>
        <name>Ca(2+)</name>
        <dbReference type="ChEBI" id="CHEBI:29108"/>
    </ligand>
</feature>
<feature type="binding site" evidence="43 47">
    <location>
        <position position="335"/>
    </location>
    <ligand>
        <name>Ca(2+)</name>
        <dbReference type="ChEBI" id="CHEBI:29108"/>
    </ligand>
</feature>
<feature type="modified residue" description="3-oxoalanine (Cys)" evidence="43">
    <location>
        <position position="84"/>
    </location>
</feature>
<feature type="glycosylation site" description="N-linked (GlcNAc...) asparagine" evidence="16 43 47">
    <location>
        <position position="115"/>
    </location>
</feature>
<feature type="glycosylation site" description="N-linked (GlcNAc...) asparagine" evidence="43 47">
    <location>
        <position position="144"/>
    </location>
</feature>
<feature type="glycosylation site" description="N-linked (GlcNAc...) asparagine" evidence="43 47">
    <location>
        <position position="246"/>
    </location>
</feature>
<feature type="glycosylation site" description="N-linked (GlcNAc...) asparagine" evidence="43 47">
    <location>
        <position position="280"/>
    </location>
</feature>
<feature type="glycosylation site" description="N-linked (GlcNAc...) asparagine" evidence="43 47">
    <location>
        <position position="325"/>
    </location>
</feature>
<feature type="glycosylation site" description="N-linked (GlcNAc...) asparagine" evidence="43 47">
    <location>
        <position position="513"/>
    </location>
</feature>
<feature type="glycosylation site" description="N-linked (GlcNAc...) asparagine" evidence="43 47">
    <location>
        <position position="537"/>
    </location>
</feature>
<feature type="disulfide bond" evidence="43 47">
    <location>
        <begin position="171"/>
        <end position="184"/>
    </location>
</feature>
<feature type="disulfide bond" evidence="43 47">
    <location>
        <begin position="422"/>
        <end position="432"/>
    </location>
</feature>
<feature type="splice variant" id="VSP_039116" description="In isoform 3." evidence="44">
    <original>RKIRQSYFASVSYLDTQVG</original>
    <variation>EDQSSTGFRLKTSSTRKYK</variation>
    <location>
        <begin position="294"/>
        <end position="312"/>
    </location>
</feature>
<feature type="splice variant" id="VSP_039117" description="In isoform 3." evidence="44">
    <location>
        <begin position="313"/>
        <end position="550"/>
    </location>
</feature>
<feature type="splice variant" id="VSP_006301" description="In isoform 2." evidence="45">
    <original>WALGEHG</original>
    <variation>FLMRTNT</variation>
    <location>
        <begin position="337"/>
        <end position="343"/>
    </location>
</feature>
<feature type="splice variant" id="VSP_006302" description="In isoform 2." evidence="45">
    <location>
        <begin position="344"/>
        <end position="550"/>
    </location>
</feature>
<feature type="sequence variant" id="VAR_026915" description="In MPS2; mild form; increase in enzyme activity observed in transfected cells." evidence="8">
    <original>L</original>
    <variation>P</variation>
    <location>
        <position position="41"/>
    </location>
</feature>
<feature type="sequence variant" id="VAR_026914" description="In MPS2; intermediate form; dbSNP:rs2124066296." evidence="11">
    <location>
        <position position="41"/>
    </location>
</feature>
<feature type="sequence variant" id="VAR_007313" description="In MPS2; dbSNP:rs869025301." evidence="40">
    <original>D</original>
    <variation>N</variation>
    <location>
        <position position="45"/>
    </location>
</feature>
<feature type="sequence variant" id="VAR_007314" description="In MPS2; mild form; dbSNP:rs1569560528." evidence="20 37">
    <original>R</original>
    <variation>P</variation>
    <location>
        <position position="48"/>
    </location>
</feature>
<feature type="sequence variant" id="VAR_007315" description="In MPS2; severe form." evidence="41">
    <original>Y</original>
    <variation>D</variation>
    <location>
        <position position="54"/>
    </location>
</feature>
<feature type="sequence variant" id="VAR_007316" description="In MPS2; mild/intermediate form; dbSNP:rs193302909." evidence="30 32 33 41">
    <original>N</original>
    <variation>D</variation>
    <location>
        <position position="63"/>
    </location>
</feature>
<feature type="sequence variant" id="VAR_007317" description="In MPS2; severe." evidence="26">
    <original>A</original>
    <variation>E</variation>
    <location>
        <position position="68"/>
    </location>
</feature>
<feature type="sequence variant" id="VAR_026916" description="In MPS2; mild form; dbSNP:rs113993954." evidence="38">
    <original>S</original>
    <variation>N</variation>
    <location>
        <position position="71"/>
    </location>
</feature>
<feature type="sequence variant" id="VAR_008998" description="In MPS2; severe form." evidence="42">
    <original>S</original>
    <variation>R</variation>
    <location>
        <position position="71"/>
    </location>
</feature>
<feature type="sequence variant" id="VAR_026917" description="In MPS2; severe form." evidence="34">
    <original>L</original>
    <variation>F</variation>
    <location>
        <position position="73"/>
    </location>
</feature>
<feature type="sequence variant" id="VAR_007318" description="In MPS2; mild form." evidence="41">
    <original>A</original>
    <variation>E</variation>
    <location>
        <position position="79"/>
    </location>
</feature>
<feature type="sequence variant" id="VAR_008999" description="In MPS2." evidence="42">
    <original>A</original>
    <variation>E</variation>
    <location>
        <position position="82"/>
    </location>
</feature>
<feature type="sequence variant" id="VAR_026918" description="In MPS2; no significant enzyme activity." evidence="15">
    <original>A</original>
    <variation>V</variation>
    <location>
        <position position="82"/>
    </location>
</feature>
<feature type="sequence variant" id="VAR_026919" description="In MPS2; severe form." evidence="38">
    <original>A</original>
    <variation>S</variation>
    <location>
        <position position="85"/>
    </location>
</feature>
<feature type="sequence variant" id="VAR_007319" description="In MPS2; mild to severe forms; dbSNP:rs113993949." evidence="32 36 37 38 42">
    <original>A</original>
    <variation>T</variation>
    <location>
        <position position="85"/>
    </location>
</feature>
<feature type="sequence variant" id="VAR_007320" description="In MPS2; intermediate to severe forms; dbSNP:rs1557340280." evidence="3 23 37 38">
    <original>P</original>
    <variation>L</variation>
    <location>
        <position position="86"/>
    </location>
</feature>
<feature type="sequence variant" id="VAR_007321" description="In MPS2." evidence="32">
    <original>P</original>
    <variation>Q</variation>
    <location>
        <position position="86"/>
    </location>
</feature>
<feature type="sequence variant" id="VAR_007322" description="In MPS2; severe form; dbSNP:rs1557340280." evidence="28 30">
    <original>P</original>
    <variation>R</variation>
    <location>
        <position position="86"/>
    </location>
</feature>
<feature type="sequence variant" id="VAR_007323" description="In MPS2; mild form." evidence="23">
    <original>S</original>
    <variation>N</variation>
    <location>
        <position position="87"/>
    </location>
</feature>
<feature type="sequence variant" id="VAR_007324" description="In MPS2; severe form; dbSNP:rs398123249." evidence="9 32 41 42">
    <original>R</original>
    <variation>C</variation>
    <location>
        <position position="88"/>
    </location>
</feature>
<feature type="sequence variant" id="VAR_026920" description="In MPS2; severe form." evidence="38">
    <original>R</original>
    <variation>G</variation>
    <location>
        <position position="88"/>
    </location>
</feature>
<feature type="sequence variant" id="VAR_007325" description="In MPS2; intermediate/severe form; higher affinity for the artificial substrate; poor transport to lysosomes; dbSNP:rs2089497431." evidence="3 7 32 36 38 41">
    <original>R</original>
    <variation>H</variation>
    <location>
        <position position="88"/>
    </location>
</feature>
<feature type="sequence variant" id="VAR_007326" description="In MPS2; severe form." evidence="41">
    <original>R</original>
    <variation>L</variation>
    <location>
        <position position="88"/>
    </location>
</feature>
<feature type="sequence variant" id="VAR_007327" description="In MPS2; severe form; total absence of residual activity; poor transport to lysosomes." evidence="3 7">
    <original>R</original>
    <variation>P</variation>
    <location>
        <position position="88"/>
    </location>
</feature>
<feature type="sequence variant" id="VAR_026921" description="In MPS2." evidence="38">
    <original>V</original>
    <variation>F</variation>
    <location>
        <position position="89"/>
    </location>
</feature>
<feature type="sequence variant" id="VAR_007328" description="In MPS2; severe form; dbSNP:rs2089497300." evidence="23">
    <original>L</original>
    <variation>P</variation>
    <location>
        <position position="92"/>
    </location>
</feature>
<feature type="sequence variant" id="VAR_007329" description="In MPS2; mild form." evidence="28">
    <original>G</original>
    <variation>D</variation>
    <location>
        <position position="94"/>
    </location>
</feature>
<feature type="sequence variant" id="VAR_026922" description="In MPS2; intermediate form." evidence="30">
    <original>R</original>
    <variation>G</variation>
    <location>
        <position position="95"/>
    </location>
</feature>
<feature type="sequence variant" id="VAR_026923" description="In MPS2; mild form." evidence="9">
    <original>R</original>
    <variation>T</variation>
    <location>
        <position position="95"/>
    </location>
</feature>
<feature type="sequence variant" id="VAR_009000" description="In MPS2; severe form." evidence="42">
    <location>
        <position position="95"/>
    </location>
</feature>
<feature type="sequence variant" id="VAR_007330" description="In MPS2; mild form." evidence="41">
    <original>L</original>
    <variation>R</variation>
    <location>
        <position position="102"/>
    </location>
</feature>
<feature type="sequence variant" id="VAR_007331" description="In MPS2; mild form." evidence="32">
    <original>Y</original>
    <variation>C</variation>
    <location>
        <position position="108"/>
    </location>
</feature>
<feature type="sequence variant" id="VAR_026924" description="In MPS2; mild form." evidence="38">
    <original>Y</original>
    <variation>S</variation>
    <location>
        <position position="108"/>
    </location>
</feature>
<feature type="sequence variant" id="VAR_007332" description="In MPS2." evidence="40">
    <original>N</original>
    <variation>Y</variation>
    <location>
        <position position="115"/>
    </location>
</feature>
<feature type="sequence variant" id="VAR_026926" description="In MPS2; severe form." evidence="11">
    <original>S</original>
    <variation>Y</variation>
    <location>
        <position position="117"/>
    </location>
</feature>
<feature type="sequence variant" id="VAR_026925" description="In MPS2; severe form; deleterious mutation; results in an inactive enzyme; dbSNP:rs483352905." evidence="10 20 32 38">
    <location>
        <position position="117"/>
    </location>
</feature>
<feature type="sequence variant" id="VAR_007333" description="In MPS2; mild to severe forms; greatly reduced activity; poor transport to lysosomes." evidence="3 7 38">
    <original>T</original>
    <variation>I</variation>
    <location>
        <position position="118"/>
    </location>
</feature>
<feature type="sequence variant" id="VAR_026927" description="In MPS2; severe form." evidence="34">
    <location>
        <position position="118"/>
    </location>
</feature>
<feature type="sequence variant" id="VAR_007334" description="In MPS2; mild form; dbSNP:rs193302911." evidence="27">
    <original>P</original>
    <variation>H</variation>
    <location>
        <position position="120"/>
    </location>
</feature>
<feature type="sequence variant" id="VAR_007335" description="In MPS2; severe form; dbSNP:rs193302911." evidence="28">
    <original>P</original>
    <variation>R</variation>
    <location>
        <position position="120"/>
    </location>
</feature>
<feature type="sequence variant" id="VAR_026928" description="In MPS2; severe form." evidence="34">
    <original>Q</original>
    <variation>H</variation>
    <location>
        <position position="121"/>
    </location>
</feature>
<feature type="sequence variant" id="VAR_026929" description="In MPS2; severe form." evidence="38">
    <original>Q</original>
    <variation>R</variation>
    <location>
        <position position="121"/>
    </location>
</feature>
<feature type="sequence variant" id="VAR_007336" description="In MPS2; mild form." evidence="32">
    <original>E</original>
    <variation>V</variation>
    <location>
        <position position="125"/>
    </location>
</feature>
<feature type="sequence variant" id="VAR_007337" description="In MPS2; severe form." evidence="25 34">
    <original>S</original>
    <variation>W</variation>
    <location>
        <position position="132"/>
    </location>
</feature>
<feature type="sequence variant" id="VAR_007338" description="In MPS2; severe form." evidence="32">
    <original>G</original>
    <variation>R</variation>
    <location>
        <position position="134"/>
    </location>
</feature>
<feature type="sequence variant" id="VAR_007339" description="In MPS2; intermediate form." evidence="23">
    <original>K</original>
    <variation>N</variation>
    <location>
        <position position="135"/>
    </location>
</feature>
<feature type="sequence variant" id="VAR_007340" description="In MPS2; intermediate form; dbSNP:rs104894861." evidence="14">
    <original>K</original>
    <variation>R</variation>
    <location>
        <position position="135"/>
    </location>
</feature>
<feature type="sequence variant" id="VAR_026930" description="In MPS2; mild/intermediate form." evidence="38">
    <original>H</original>
    <variation>D</variation>
    <location>
        <position position="138"/>
    </location>
</feature>
<feature type="sequence variant" id="VAR_026931" description="In MPS2; no significant enzyme activity." evidence="15">
    <original>G</original>
    <variation>V</variation>
    <location>
        <position position="140"/>
    </location>
</feature>
<feature type="sequence variant" id="VAR_007341" description="In MPS2." evidence="4 6">
    <original>S</original>
    <variation>F</variation>
    <location>
        <position position="143"/>
    </location>
</feature>
<feature type="sequence variant" id="VAR_026932" description="In MPS2; intermediate form." evidence="38">
    <original>D</original>
    <variation>H</variation>
    <location>
        <position position="148"/>
    </location>
</feature>
<feature type="sequence variant" id="VAR_007342" description="In MPS2; severe form." evidence="41">
    <original>H</original>
    <variation>P</variation>
    <location>
        <position position="159"/>
    </location>
</feature>
<feature type="sequence variant" id="VAR_007343" description="In MPS2; intermediate form.">
    <location>
        <position position="159"/>
    </location>
</feature>
<feature type="sequence variant" id="VAR_007344" description="In MPS2; dbSNP:rs104894856.">
    <original>P</original>
    <variation>R</variation>
    <location>
        <position position="160"/>
    </location>
</feature>
<feature type="sequence variant" id="VAR_026933" description="In MPS2; mild form." evidence="9">
    <original>N</original>
    <variation>I</variation>
    <location>
        <position position="181"/>
    </location>
</feature>
<feature type="sequence variant" id="VAR_026934" description="In MPS2; intermediate form." evidence="37">
    <original>L</original>
    <variation>P</variation>
    <location>
        <position position="182"/>
    </location>
</feature>
<feature type="sequence variant" id="VAR_007345" description="In MPS2; mild/intermediate form." evidence="32">
    <original>C</original>
    <variation>F</variation>
    <location>
        <position position="184"/>
    </location>
</feature>
<feature type="sequence variant" id="VAR_007346" description="In MPS2." evidence="6">
    <original>C</original>
    <variation>W</variation>
    <location>
        <position position="184"/>
    </location>
</feature>
<feature type="sequence variant" id="VAR_007347" description="In MPS2; mild/intermediate form; dbSNP:rs398123250." evidence="37 41">
    <original>L</original>
    <variation>S</variation>
    <location>
        <position position="196"/>
    </location>
</feature>
<feature type="sequence variant" id="VAR_007348" description="In MPS2; mild form." evidence="41">
    <original>D</original>
    <variation>G</variation>
    <location>
        <position position="198"/>
    </location>
</feature>
<feature type="sequence variant" id="VAR_026935" description="In MPS2; intermediate form; dbSNP:rs864622779." evidence="30">
    <original>A</original>
    <variation>P</variation>
    <location>
        <position position="205"/>
    </location>
</feature>
<feature type="sequence variant" id="VAR_007349" description="In MPS2; intermediate form." evidence="28">
    <original>L</original>
    <variation>P</variation>
    <location>
        <position position="221"/>
    </location>
</feature>
<feature type="sequence variant" id="VAR_007350" description="In MPS2; severe form." evidence="41">
    <original>G</original>
    <variation>E</variation>
    <location>
        <position position="224"/>
    </location>
</feature>
<feature type="sequence variant" id="VAR_007351" description="In MPS2; intermediate form." evidence="37">
    <original>Y</original>
    <variation>D</variation>
    <location>
        <position position="225"/>
    </location>
</feature>
<feature type="sequence variant" id="VAR_026936" description="In MPS2; intermediate form." evidence="37">
    <original>K</original>
    <variation>M</variation>
    <location>
        <position position="227"/>
    </location>
</feature>
<feature type="sequence variant" id="VAR_007352" description="In MPS2; severe form.">
    <original>K</original>
    <variation>Q</variation>
    <location>
        <position position="227"/>
    </location>
</feature>
<feature type="sequence variant" id="VAR_007353" description="In MPS2; dbSNP:rs113993945." evidence="40">
    <original>P</original>
    <variation>L</variation>
    <location>
        <position position="228"/>
    </location>
</feature>
<feature type="sequence variant" id="VAR_026937" description="In MPS2; severe form." evidence="39">
    <original>P</original>
    <variation>T</variation>
    <location>
        <position position="228"/>
    </location>
</feature>
<feature type="sequence variant" id="VAR_026938" description="In MPS2; intermediate/severe form; dbSNP:rs193302905." evidence="38 39">
    <original>H</original>
    <variation>R</variation>
    <location>
        <position position="229"/>
    </location>
</feature>
<feature type="sequence variant" id="VAR_007354" description="In MPS2; severe form." evidence="25">
    <original>H</original>
    <variation>Y</variation>
    <location>
        <position position="229"/>
    </location>
</feature>
<feature type="sequence variant" id="VAR_026939" description="In MPS2; mild form; dbSNP:rs2089450305." evidence="39">
    <original>P</original>
    <variation>L</variation>
    <location>
        <position position="231"/>
    </location>
</feature>
<feature type="sequence variant" id="VAR_007355" description="In MPS2; dbSNP:rs146458524." evidence="32">
    <original>D</original>
    <variation>N</variation>
    <location>
        <position position="252"/>
    </location>
</feature>
<feature type="sequence variant" id="VAR_026940" description="In MPS2; severe form." evidence="11">
    <original>L</original>
    <variation>P</variation>
    <location>
        <position position="259"/>
    </location>
</feature>
<feature type="sequence variant" id="VAR_009001" description="In MPS2." evidence="5">
    <original>Y</original>
    <variation>N</variation>
    <location>
        <position position="264"/>
    </location>
</feature>
<feature type="sequence variant" id="VAR_026941" description="In MPS2; intermediate form; deleterious mutation; residual activity of 7.5% of the wild-type." evidence="10">
    <original>N</original>
    <variation>I</variation>
    <location>
        <position position="265"/>
    </location>
</feature>
<feature type="sequence variant" id="VAR_007356" description="In MPS2; mild form." evidence="3">
    <original>P</original>
    <variation>H</variation>
    <location>
        <position position="266"/>
    </location>
</feature>
<feature type="sequence variant" id="VAR_007357" description="In MPS2." evidence="40">
    <original>P</original>
    <variation>R</variation>
    <location>
        <position position="266"/>
    </location>
</feature>
<feature type="sequence variant" id="VAR_007358" description="In MPS2; dbSNP:rs1085308006." evidence="6">
    <original>D</original>
    <variation>V</variation>
    <location>
        <position position="269"/>
    </location>
</feature>
<feature type="sequence variant" id="VAR_007359" description="In MPS2; mild form." evidence="26">
    <original>Q</original>
    <variation>H</variation>
    <location>
        <position position="293"/>
    </location>
</feature>
<feature type="sequence variant" id="VAR_026942" description="In MPS2; mild form." evidence="11">
    <original>S</original>
    <variation>I</variation>
    <location>
        <position position="299"/>
    </location>
</feature>
<feature type="sequence variant" id="VAR_026943" description="In MPS2; mild form." evidence="39">
    <original>D</original>
    <variation>E</variation>
    <location>
        <position position="308"/>
    </location>
</feature>
<feature type="sequence variant" id="VAR_026944" description="In MPS2; intermediate form." evidence="37">
    <original>D</original>
    <variation>N</variation>
    <location>
        <position position="308"/>
    </location>
</feature>
<feature type="sequence variant" id="VAR_026945" description="In MPS2; severe form; dbSNP:rs145807417." evidence="39">
    <original>T</original>
    <variation>A</variation>
    <location>
        <position position="309"/>
    </location>
</feature>
<feature type="sequence variant" id="VAR_026946" description="In MPS2; uncertain significance; dbSNP:rs201048643." evidence="39">
    <original>R</original>
    <variation>C</variation>
    <location>
        <position position="313"/>
    </location>
</feature>
<feature type="sequence variant" id="VAR_026947" description="In MPS2; severe form." evidence="37">
    <original>L</original>
    <variation>P</variation>
    <location>
        <position position="314"/>
    </location>
</feature>
<feature type="sequence variant" id="VAR_007360" description="In MPS2; severe form; dbSNP:rs104894853." evidence="20 29 31 32 37 38 41">
    <original>S</original>
    <variation>L</variation>
    <location>
        <position position="333"/>
    </location>
</feature>
<feature type="sequence variant" id="VAR_009002" description="In MPS2; severe form; dbSNP:rs2089378583." evidence="31">
    <original>D</original>
    <variation>G</variation>
    <location>
        <position position="334"/>
    </location>
</feature>
<feature type="sequence variant" id="VAR_026948" description="In MPS2; mild form." evidence="38">
    <original>D</original>
    <variation>N</variation>
    <location>
        <position position="334"/>
    </location>
</feature>
<feature type="sequence variant" id="VAR_026949" description="In MPS2; intermediate form." evidence="38">
    <original>H</original>
    <variation>R</variation>
    <location>
        <position position="335"/>
    </location>
</feature>
<feature type="sequence variant" id="VAR_026950" description="In MPS2; severe from." evidence="38">
    <original>G</original>
    <variation>E</variation>
    <location>
        <position position="336"/>
    </location>
</feature>
<feature type="sequence variant" id="VAR_026951" description="In MPS2; severe form." evidence="34">
    <original>G</original>
    <variation>R</variation>
    <location>
        <position position="336"/>
    </location>
</feature>
<feature type="sequence variant" id="VAR_007361" description="In MPS2; intermediate form." evidence="20 37">
    <original>W</original>
    <variation>R</variation>
    <location>
        <position position="337"/>
    </location>
</feature>
<feature type="sequence variant" id="VAR_026952" description="In MPS2; severe form." evidence="38">
    <original>L</original>
    <variation>R</variation>
    <location>
        <position position="339"/>
    </location>
</feature>
<feature type="sequence variant" id="VAR_007362" description="In MPS2; mild form." evidence="41">
    <original>G</original>
    <variation>D</variation>
    <location>
        <position position="340"/>
    </location>
</feature>
<feature type="sequence variant" id="VAR_008134" description="In MPS2; severe form; dbSNP:rs2124006380." evidence="4 34">
    <original>E</original>
    <variation>K</variation>
    <location>
        <position position="341"/>
    </location>
</feature>
<feature type="sequence variant" id="VAR_008135" description="In MPS2; mild form; dbSNP:rs2089343220." evidence="4">
    <original>H</original>
    <variation>Y</variation>
    <location>
        <position position="342"/>
    </location>
</feature>
<feature type="sequence variant" id="VAR_007363" description="In MPS2; mild form." evidence="23">
    <original>W</original>
    <variation>C</variation>
    <location>
        <position position="345"/>
    </location>
</feature>
<feature type="sequence variant" id="VAR_007364" description="In MPS2; mild/severe form." evidence="29">
    <original>A</original>
    <variation>D</variation>
    <location>
        <position position="346"/>
    </location>
</feature>
<feature type="sequence variant" id="VAR_007365" description="In MPS2; mild/severe form." evidence="21">
    <original>A</original>
    <variation>V</variation>
    <location>
        <position position="346"/>
    </location>
</feature>
<feature type="sequence variant" id="VAR_007366" description="In MPS2." evidence="32">
    <original>K</original>
    <variation>I</variation>
    <location>
        <position position="347"/>
    </location>
</feature>
<feature type="sequence variant" id="VAR_026953" description="In MPS2; severe form." evidence="34">
    <original>K</original>
    <variation>Q</variation>
    <location>
        <position position="347"/>
    </location>
</feature>
<feature type="sequence variant" id="VAR_007367" description="In MPS2; severe form; deleterious mutation confirmed." evidence="10 33">
    <original>K</original>
    <variation>T</variation>
    <location>
        <position position="347"/>
    </location>
</feature>
<feature type="sequence variant" id="VAR_007368" description="In MPS2." evidence="6">
    <original>Y</original>
    <variation>H</variation>
    <location>
        <position position="348"/>
    </location>
</feature>
<feature type="sequence variant" id="VAR_007369" description="In MPS2; severe form." evidence="36 37">
    <original>S</original>
    <variation>I</variation>
    <location>
        <position position="349"/>
    </location>
</feature>
<feature type="sequence variant" id="VAR_007370" description="In MPS2; severe form." evidence="25">
    <original>P</original>
    <variation>R</variation>
    <location>
        <position position="358"/>
    </location>
</feature>
<feature type="sequence variant" id="VAR_007371" description="In MPS2; intermediate form." evidence="32 38">
    <original>L</original>
    <variation>R</variation>
    <location>
        <position position="403"/>
    </location>
</feature>
<feature type="sequence variant" id="VAR_026954" description="In MPS2." evidence="24">
    <original>L</original>
    <variation>P</variation>
    <location>
        <position position="410"/>
    </location>
</feature>
<feature type="sequence variant" id="VAR_007372" description="In MPS2; mild form; dbSNP:rs199422229." evidence="14 28">
    <original>C</original>
    <variation>G</variation>
    <location>
        <position position="422"/>
    </location>
</feature>
<feature type="sequence variant" id="VAR_026955" description="In MPS2; severe form; dbSNP:rs199422229." evidence="9">
    <original>C</original>
    <variation>R</variation>
    <location>
        <position position="422"/>
    </location>
</feature>
<feature type="sequence variant" id="VAR_007373" description="In MPS2; severe form." evidence="41">
    <original>C</original>
    <variation>Y</variation>
    <location>
        <position position="432"/>
    </location>
</feature>
<feature type="sequence variant" id="VAR_007374" description="In MPS2." evidence="40">
    <original>E</original>
    <variation>K</variation>
    <location>
        <position position="434"/>
    </location>
</feature>
<feature type="sequence variant" id="VAR_009003" description="In MPS2; severe form." evidence="5">
    <original>Q</original>
    <variation>P</variation>
    <location>
        <position position="465"/>
    </location>
</feature>
<feature type="sequence variant" id="VAR_026956" description="In MPS2; severe form; dbSNP:rs1602725808." evidence="9 38">
    <original>P</original>
    <variation>L</variation>
    <location>
        <position position="467"/>
    </location>
</feature>
<feature type="sequence variant" id="VAR_007375" description="In MPS2; mild to severe forms." evidence="18">
    <original>R</original>
    <variation>G</variation>
    <location>
        <position position="468"/>
    </location>
</feature>
<feature type="sequence variant" id="VAR_007376" description="In MPS2; mild to severe forms; dbSNP:rs113993946." evidence="20 33 37">
    <original>R</original>
    <variation>L</variation>
    <location>
        <position position="468"/>
    </location>
</feature>
<feature type="sequence variant" id="VAR_007377" description="In MPS2; severe/intermediate form; greatly reduced activity; poor transport to lysosomes; dbSNP:rs113993946." evidence="7 9 20 30 32 33 34 35 37 38 41 42">
    <original>R</original>
    <variation>Q</variation>
    <location>
        <position position="468"/>
    </location>
</feature>
<feature type="sequence variant" id="VAR_007378" description="In MPS2; mild to severe forms; dbSNP:rs199422231." evidence="5 9 13 23 30 34 37 38 42">
    <original>R</original>
    <variation>W</variation>
    <location>
        <position position="468"/>
    </location>
</feature>
<feature type="sequence variant" id="VAR_007379" description="In MPS2; mild form." evidence="25">
    <original>P</original>
    <variation>H</variation>
    <location>
        <position position="469"/>
    </location>
</feature>
<feature type="sequence variant" id="VAR_007380" description="In MPS2; mild form; dbSNP:rs864622773." evidence="26">
    <original>D</original>
    <variation>G</variation>
    <location>
        <position position="478"/>
    </location>
</feature>
<feature type="sequence variant" id="VAR_007381" description="In MPS2; severe form." evidence="41">
    <original>D</original>
    <variation>Y</variation>
    <location>
        <position position="478"/>
    </location>
</feature>
<feature type="sequence variant" id="VAR_026957" description="In MPS2; mild form; dbSNP:rs2123994251." evidence="38">
    <original>P</original>
    <variation>L</variation>
    <location>
        <position position="480"/>
    </location>
</feature>
<feature type="sequence variant" id="VAR_026958" description="In MPS2; mild form." evidence="38">
    <original>P</original>
    <variation>Q</variation>
    <location>
        <position position="480"/>
    </location>
</feature>
<feature type="sequence variant" id="VAR_026959" description="In MPS2; severe form." evidence="38">
    <original>P</original>
    <variation>R</variation>
    <location>
        <position position="480"/>
    </location>
</feature>
<feature type="sequence variant" id="VAR_007382" description="In MPS2; dbSNP:rs782430567." evidence="40">
    <original>I</original>
    <variation>K</variation>
    <location>
        <position position="485"/>
    </location>
</feature>
<feature type="sequence variant" id="VAR_007383" description="In MPS2; severe form." evidence="26 41">
    <original>I</original>
    <variation>R</variation>
    <location>
        <position position="485"/>
    </location>
</feature>
<feature type="sequence variant" id="VAR_026960" description="In MPS2; intermediate form; mutation A-489 confirmed as causative of MPS2." evidence="12">
    <original>MG</original>
    <variation>IA</variation>
    <location>
        <begin position="488"/>
        <end position="489"/>
    </location>
</feature>
<feature type="sequence variant" id="VAR_026961" description="In MPS2; intermediate form." evidence="38">
    <original>Y</original>
    <variation>S</variation>
    <location>
        <position position="490"/>
    </location>
</feature>
<feature type="sequence variant" id="VAR_008136" description="In MPS2; mild form." evidence="4">
    <original>S</original>
    <variation>F</variation>
    <location>
        <position position="491"/>
    </location>
</feature>
<feature type="sequence variant" id="VAR_007384" description="In MPS2; severe form; dbSNP:rs2124648374." evidence="40">
    <original>W</original>
    <variation>C</variation>
    <location>
        <position position="502"/>
    </location>
</feature>
<feature type="sequence variant" id="VAR_007385" description="In MPS2; dbSNP:rs199422228.">
    <original>W</original>
    <variation>S</variation>
    <location>
        <position position="502"/>
    </location>
</feature>
<feature type="sequence variant" id="VAR_026962" description="In MPS2; severe form; dbSNP:rs2124648301." evidence="34">
    <original>E</original>
    <variation>K</variation>
    <location>
        <position position="521"/>
    </location>
</feature>
<feature type="sequence variant" id="VAR_007386" description="In MPS2; severe form." evidence="34 36 42">
    <original>E</original>
    <variation>V</variation>
    <location>
        <position position="521"/>
    </location>
</feature>
<feature type="sequence variant" id="VAR_007387" description="In MPS2; mild form; dbSNP:rs2089303696." evidence="25">
    <original>Y</original>
    <variation>C</variation>
    <location>
        <position position="523"/>
    </location>
</feature>
<feature type="strand" evidence="49">
    <location>
        <begin position="38"/>
        <end position="44"/>
    </location>
</feature>
<feature type="helix" evidence="49">
    <location>
        <begin position="52"/>
        <end position="54"/>
    </location>
</feature>
<feature type="strand" evidence="49">
    <location>
        <begin position="57"/>
        <end position="59"/>
    </location>
</feature>
<feature type="helix" evidence="49">
    <location>
        <begin position="62"/>
        <end position="69"/>
    </location>
</feature>
<feature type="strand" evidence="49">
    <location>
        <begin position="71"/>
        <end position="78"/>
    </location>
</feature>
<feature type="strand" evidence="49">
    <location>
        <begin position="80"/>
        <end position="83"/>
    </location>
</feature>
<feature type="helix" evidence="49">
    <location>
        <begin position="84"/>
        <end position="93"/>
    </location>
</feature>
<feature type="helix" evidence="49">
    <location>
        <begin position="97"/>
        <end position="100"/>
    </location>
</feature>
<feature type="strand" evidence="49">
    <location>
        <begin position="103"/>
        <end position="106"/>
    </location>
</feature>
<feature type="helix" evidence="49">
    <location>
        <begin position="109"/>
        <end position="112"/>
    </location>
</feature>
<feature type="helix" evidence="49">
    <location>
        <begin position="119"/>
        <end position="125"/>
    </location>
</feature>
<feature type="strand" evidence="49">
    <location>
        <begin position="129"/>
        <end position="137"/>
    </location>
</feature>
<feature type="helix" evidence="49">
    <location>
        <begin position="141"/>
        <end position="143"/>
    </location>
</feature>
<feature type="turn" evidence="49">
    <location>
        <begin position="144"/>
        <end position="147"/>
    </location>
</feature>
<feature type="turn" evidence="49">
    <location>
        <begin position="149"/>
        <end position="151"/>
    </location>
</feature>
<feature type="helix" evidence="49">
    <location>
        <begin position="161"/>
        <end position="165"/>
    </location>
</feature>
<feature type="strand" evidence="49">
    <location>
        <begin position="182"/>
        <end position="186"/>
    </location>
</feature>
<feature type="helix" evidence="49">
    <location>
        <begin position="188"/>
        <end position="190"/>
    </location>
</feature>
<feature type="helix" evidence="49">
    <location>
        <begin position="192"/>
        <end position="194"/>
    </location>
</feature>
<feature type="helix" evidence="49">
    <location>
        <begin position="197"/>
        <end position="212"/>
    </location>
</feature>
<feature type="strand" evidence="50">
    <location>
        <begin position="215"/>
        <end position="217"/>
    </location>
</feature>
<feature type="strand" evidence="49">
    <location>
        <begin position="219"/>
        <end position="225"/>
    </location>
</feature>
<feature type="strand" evidence="49">
    <location>
        <begin position="229"/>
        <end position="235"/>
    </location>
</feature>
<feature type="helix" evidence="49">
    <location>
        <begin position="236"/>
        <end position="241"/>
    </location>
</feature>
<feature type="helix" evidence="49">
    <location>
        <begin position="244"/>
        <end position="246"/>
    </location>
</feature>
<feature type="helix" evidence="49">
    <location>
        <begin position="261"/>
        <end position="263"/>
    </location>
</feature>
<feature type="helix" evidence="49">
    <location>
        <begin position="270"/>
        <end position="272"/>
    </location>
</feature>
<feature type="helix" evidence="49">
    <location>
        <begin position="274"/>
        <end position="277"/>
    </location>
</feature>
<feature type="turn" evidence="49">
    <location>
        <begin position="283"/>
        <end position="285"/>
    </location>
</feature>
<feature type="helix" evidence="49">
    <location>
        <begin position="290"/>
        <end position="320"/>
    </location>
</feature>
<feature type="turn" evidence="49">
    <location>
        <begin position="324"/>
        <end position="326"/>
    </location>
</feature>
<feature type="strand" evidence="49">
    <location>
        <begin position="327"/>
        <end position="334"/>
    </location>
</feature>
<feature type="strand" evidence="49">
    <location>
        <begin position="338"/>
        <end position="340"/>
    </location>
</feature>
<feature type="helix" evidence="49">
    <location>
        <begin position="341"/>
        <end position="343"/>
    </location>
</feature>
<feature type="strand" evidence="49">
    <location>
        <begin position="345"/>
        <end position="349"/>
    </location>
</feature>
<feature type="helix" evidence="49">
    <location>
        <begin position="352"/>
        <end position="355"/>
    </location>
</feature>
<feature type="strand" evidence="49">
    <location>
        <begin position="359"/>
        <end position="362"/>
    </location>
</feature>
<feature type="turn" evidence="49">
    <location>
        <begin position="364"/>
        <end position="366"/>
    </location>
</feature>
<feature type="strand" evidence="49">
    <location>
        <begin position="395"/>
        <end position="402"/>
    </location>
</feature>
<feature type="helix" evidence="49">
    <location>
        <begin position="403"/>
        <end position="405"/>
    </location>
</feature>
<feature type="helix" evidence="49">
    <location>
        <begin position="406"/>
        <end position="413"/>
    </location>
</feature>
<feature type="strand" evidence="49">
    <location>
        <begin position="433"/>
        <end position="435"/>
    </location>
</feature>
<feature type="helix" evidence="49">
    <location>
        <begin position="439"/>
        <end position="442"/>
    </location>
</feature>
<feature type="helix" evidence="49">
    <location>
        <begin position="457"/>
        <end position="460"/>
    </location>
</feature>
<feature type="strand" evidence="49">
    <location>
        <begin position="462"/>
        <end position="469"/>
    </location>
</feature>
<feature type="strand" evidence="49">
    <location>
        <begin position="477"/>
        <end position="479"/>
    </location>
</feature>
<feature type="helix" evidence="49">
    <location>
        <begin position="482"/>
        <end position="484"/>
    </location>
</feature>
<feature type="strand" evidence="49">
    <location>
        <begin position="487"/>
        <end position="493"/>
    </location>
</feature>
<feature type="strand" evidence="49">
    <location>
        <begin position="495"/>
        <end position="506"/>
    </location>
</feature>
<feature type="turn" evidence="49">
    <location>
        <begin position="507"/>
        <end position="510"/>
    </location>
</feature>
<feature type="strand" evidence="49">
    <location>
        <begin position="511"/>
        <end position="524"/>
    </location>
</feature>
<feature type="turn" evidence="49">
    <location>
        <begin position="525"/>
        <end position="527"/>
    </location>
</feature>
<feature type="helix" evidence="49">
    <location>
        <begin position="542"/>
        <end position="548"/>
    </location>
</feature>
<name>IDS_HUMAN</name>
<comment type="function">
    <text evidence="7 10 19">Lysosomal enzyme involved in the degradation pathway of dermatan sulfate and heparan sulfate.</text>
</comment>
<comment type="catalytic activity">
    <reaction evidence="7 10 19">
        <text>Hydrolysis of the 2-sulfate groups of the L-iduronate 2-sulfate units of dermatan sulfate, heparan sulfate and heparin.</text>
        <dbReference type="EC" id="3.1.6.13"/>
    </reaction>
</comment>
<comment type="cofactor">
    <cofactor evidence="19">
        <name>Ca(2+)</name>
        <dbReference type="ChEBI" id="CHEBI:29108"/>
    </cofactor>
    <text evidence="19">Binds 1 Ca(2+) ion per subunit.</text>
</comment>
<comment type="biophysicochemical properties">
    <kinetics>
        <KM evidence="7">327 uM for O-(alpha-L-idopyranosyluronic acid-2-sulfate)-(1-&gt;4)-2,5 anhydromannose-6-sulfate</KM>
    </kinetics>
</comment>
<comment type="subunit">
    <text evidence="19">Monomer (PubMed:28593992). The 58-kDa mature form is composed of two chains resulting from proteolitic processing, the 42-kDa chain and the 14-kDa chain that remain stably associated and form the 58-kDa intermediate form which is enzymatically active (PubMed:28593992).</text>
</comment>
<comment type="interaction">
    <interactant intactId="EBI-2687288">
        <id>P22304</id>
    </interactant>
    <interactant intactId="EBI-723091">
        <id>Q8NBJ7</id>
        <label>SUMF2</label>
    </interactant>
    <organismsDiffer>false</organismsDiffer>
    <experiments>2</experiments>
</comment>
<comment type="subcellular location">
    <subcellularLocation>
        <location evidence="7">Lysosome</location>
    </subcellularLocation>
</comment>
<comment type="alternative products">
    <event type="alternative splicing"/>
    <isoform>
        <id>P22304-1</id>
        <name>1</name>
        <name>Long</name>
        <sequence type="displayed"/>
    </isoform>
    <isoform>
        <id>P22304-2</id>
        <name>2</name>
        <name>Short</name>
        <sequence type="described" ref="VSP_006301 VSP_006302"/>
    </isoform>
    <isoform>
        <id>P22304-3</id>
        <name>3</name>
        <sequence type="described" ref="VSP_039116 VSP_039117"/>
    </isoform>
</comment>
<comment type="tissue specificity">
    <text>Liver, kidney, lung, and placenta.</text>
</comment>
<comment type="PTM">
    <text evidence="22">Synthesized as a 75-kDa precursor form in the endoplasmic reticulum (ER), and then processed by proteolytic cleavage through various intermediates to yield a 55-kDa mature form, with the release of an 18 kDa polypeptide.</text>
</comment>
<comment type="PTM">
    <text evidence="1">The conversion to 3-oxoalanine (also known as C-formylglycine, FGly), of a serine or cysteine residue in prokaryotes and of a cysteine residue in eukaryotes, is critical for catalytic activity.</text>
</comment>
<comment type="disease" evidence="3 4 5 6 7 8 9 10 11 12 13 14 15 18 20 21 23 24 25 26 27 28 29 30 31 32 33 34 35 36 37 38 39 40 41 42">
    <disease id="DI-00773">
        <name>Mucopolysaccharidosis 2</name>
        <acronym>MPS2</acronym>
        <description>An X-linked lysosomal storage disease characterized by intracellular accumulation of heparan sulfate and dermatan sulfate and their excretion in urine. Most children with MPS2 have a severe form with early somatic abnormalities including skeletal deformities, hepatosplenomegaly, and progressive cardiopulmonary deterioration. A prominent feature is neurological damage that presents as developmental delay and hyperactivity but progresses to intellectual disability and dementia. They die before 15 years of age, usually as a result of obstructive airway disease or cardiac failure. In contrast, those with a mild form of MPS2 may survive into adulthood, with attenuated somatic complications and often without intellectual disability.</description>
        <dbReference type="MIM" id="309900"/>
    </disease>
    <text>The disease is caused by variants affecting the gene represented in this entry.</text>
</comment>
<comment type="similarity">
    <text evidence="46">Belongs to the sulfatase family.</text>
</comment>
<reference key="1">
    <citation type="journal article" date="1990" name="Proc. Natl. Acad. Sci. U.S.A.">
        <title>Hunter syndrome: isolation of an iduronate-2-sulfatase cDNA clone and analysis of patient DNA.</title>
        <authorList>
            <person name="Wilson P.J."/>
            <person name="Morris C.P."/>
            <person name="Anson D.S."/>
            <person name="Occhiodoro T."/>
            <person name="Bielicki J."/>
            <person name="Clements P.R."/>
            <person name="Hopwood J.J."/>
        </authorList>
    </citation>
    <scope>NUCLEOTIDE SEQUENCE [MRNA] (ISOFORM 1)</scope>
    <scope>PROTEIN SEQUENCE OF 34-58 AND 456-473</scope>
    <source>
        <tissue>Endothelial cell</tissue>
    </source>
</reference>
<reference key="2">
    <citation type="journal article" date="1993" name="Genomics">
        <title>Sequence of the human iduronate 2-sulfatase (IDS) gene.</title>
        <authorList>
            <person name="Wilson P.J."/>
            <person name="Meaney C.A."/>
            <person name="Hopwood J.J."/>
            <person name="Morris C.P."/>
        </authorList>
    </citation>
    <scope>NUCLEOTIDE SEQUENCE [GENOMIC DNA]</scope>
</reference>
<reference key="3">
    <citation type="journal article" date="1995" name="Genome Res.">
        <title>130 kb of DNA sequence reveals two new genes and a regional duplication distal to the human iduronate-2-sulfate sulfatase locus.</title>
        <authorList>
            <person name="Timms K.M."/>
            <person name="Lu F."/>
            <person name="Shen Y."/>
            <person name="Pierson C.A."/>
            <person name="Muzny D.M."/>
            <person name="Gu Y."/>
            <person name="Nelson D.L."/>
            <person name="Gibbs R.A."/>
        </authorList>
    </citation>
    <scope>NUCLEOTIDE SEQUENCE [GENOMIC DNA]</scope>
</reference>
<reference key="4">
    <citation type="journal article" date="1995" name="Genomics">
        <title>Identification of an alternative transcript from the human iduronate-2-sulfatase (IDS) gene.</title>
        <authorList>
            <person name="Malmgren H."/>
            <person name="Carlberg B.M."/>
            <person name="Pettersson U."/>
            <person name="Bondeson M.L."/>
        </authorList>
    </citation>
    <scope>NUCLEOTIDE SEQUENCE [MRNA] (ISOFORM 2)</scope>
    <source>
        <tissue>Lymphocyte</tissue>
    </source>
</reference>
<reference key="5">
    <citation type="journal article" date="2005" name="Nature">
        <title>The DNA sequence of the human X chromosome.</title>
        <authorList>
            <person name="Ross M.T."/>
            <person name="Grafham D.V."/>
            <person name="Coffey A.J."/>
            <person name="Scherer S."/>
            <person name="McLay K."/>
            <person name="Muzny D."/>
            <person name="Platzer M."/>
            <person name="Howell G.R."/>
            <person name="Burrows C."/>
            <person name="Bird C.P."/>
            <person name="Frankish A."/>
            <person name="Lovell F.L."/>
            <person name="Howe K.L."/>
            <person name="Ashurst J.L."/>
            <person name="Fulton R.S."/>
            <person name="Sudbrak R."/>
            <person name="Wen G."/>
            <person name="Jones M.C."/>
            <person name="Hurles M.E."/>
            <person name="Andrews T.D."/>
            <person name="Scott C.E."/>
            <person name="Searle S."/>
            <person name="Ramser J."/>
            <person name="Whittaker A."/>
            <person name="Deadman R."/>
            <person name="Carter N.P."/>
            <person name="Hunt S.E."/>
            <person name="Chen R."/>
            <person name="Cree A."/>
            <person name="Gunaratne P."/>
            <person name="Havlak P."/>
            <person name="Hodgson A."/>
            <person name="Metzker M.L."/>
            <person name="Richards S."/>
            <person name="Scott G."/>
            <person name="Steffen D."/>
            <person name="Sodergren E."/>
            <person name="Wheeler D.A."/>
            <person name="Worley K.C."/>
            <person name="Ainscough R."/>
            <person name="Ambrose K.D."/>
            <person name="Ansari-Lari M.A."/>
            <person name="Aradhya S."/>
            <person name="Ashwell R.I."/>
            <person name="Babbage A.K."/>
            <person name="Bagguley C.L."/>
            <person name="Ballabio A."/>
            <person name="Banerjee R."/>
            <person name="Barker G.E."/>
            <person name="Barlow K.F."/>
            <person name="Barrett I.P."/>
            <person name="Bates K.N."/>
            <person name="Beare D.M."/>
            <person name="Beasley H."/>
            <person name="Beasley O."/>
            <person name="Beck A."/>
            <person name="Bethel G."/>
            <person name="Blechschmidt K."/>
            <person name="Brady N."/>
            <person name="Bray-Allen S."/>
            <person name="Bridgeman A.M."/>
            <person name="Brown A.J."/>
            <person name="Brown M.J."/>
            <person name="Bonnin D."/>
            <person name="Bruford E.A."/>
            <person name="Buhay C."/>
            <person name="Burch P."/>
            <person name="Burford D."/>
            <person name="Burgess J."/>
            <person name="Burrill W."/>
            <person name="Burton J."/>
            <person name="Bye J.M."/>
            <person name="Carder C."/>
            <person name="Carrel L."/>
            <person name="Chako J."/>
            <person name="Chapman J.C."/>
            <person name="Chavez D."/>
            <person name="Chen E."/>
            <person name="Chen G."/>
            <person name="Chen Y."/>
            <person name="Chen Z."/>
            <person name="Chinault C."/>
            <person name="Ciccodicola A."/>
            <person name="Clark S.Y."/>
            <person name="Clarke G."/>
            <person name="Clee C.M."/>
            <person name="Clegg S."/>
            <person name="Clerc-Blankenburg K."/>
            <person name="Clifford K."/>
            <person name="Cobley V."/>
            <person name="Cole C.G."/>
            <person name="Conquer J.S."/>
            <person name="Corby N."/>
            <person name="Connor R.E."/>
            <person name="David R."/>
            <person name="Davies J."/>
            <person name="Davis C."/>
            <person name="Davis J."/>
            <person name="Delgado O."/>
            <person name="Deshazo D."/>
            <person name="Dhami P."/>
            <person name="Ding Y."/>
            <person name="Dinh H."/>
            <person name="Dodsworth S."/>
            <person name="Draper H."/>
            <person name="Dugan-Rocha S."/>
            <person name="Dunham A."/>
            <person name="Dunn M."/>
            <person name="Durbin K.J."/>
            <person name="Dutta I."/>
            <person name="Eades T."/>
            <person name="Ellwood M."/>
            <person name="Emery-Cohen A."/>
            <person name="Errington H."/>
            <person name="Evans K.L."/>
            <person name="Faulkner L."/>
            <person name="Francis F."/>
            <person name="Frankland J."/>
            <person name="Fraser A.E."/>
            <person name="Galgoczy P."/>
            <person name="Gilbert J."/>
            <person name="Gill R."/>
            <person name="Gloeckner G."/>
            <person name="Gregory S.G."/>
            <person name="Gribble S."/>
            <person name="Griffiths C."/>
            <person name="Grocock R."/>
            <person name="Gu Y."/>
            <person name="Gwilliam R."/>
            <person name="Hamilton C."/>
            <person name="Hart E.A."/>
            <person name="Hawes A."/>
            <person name="Heath P.D."/>
            <person name="Heitmann K."/>
            <person name="Hennig S."/>
            <person name="Hernandez J."/>
            <person name="Hinzmann B."/>
            <person name="Ho S."/>
            <person name="Hoffs M."/>
            <person name="Howden P.J."/>
            <person name="Huckle E.J."/>
            <person name="Hume J."/>
            <person name="Hunt P.J."/>
            <person name="Hunt A.R."/>
            <person name="Isherwood J."/>
            <person name="Jacob L."/>
            <person name="Johnson D."/>
            <person name="Jones S."/>
            <person name="de Jong P.J."/>
            <person name="Joseph S.S."/>
            <person name="Keenan S."/>
            <person name="Kelly S."/>
            <person name="Kershaw J.K."/>
            <person name="Khan Z."/>
            <person name="Kioschis P."/>
            <person name="Klages S."/>
            <person name="Knights A.J."/>
            <person name="Kosiura A."/>
            <person name="Kovar-Smith C."/>
            <person name="Laird G.K."/>
            <person name="Langford C."/>
            <person name="Lawlor S."/>
            <person name="Leversha M."/>
            <person name="Lewis L."/>
            <person name="Liu W."/>
            <person name="Lloyd C."/>
            <person name="Lloyd D.M."/>
            <person name="Loulseged H."/>
            <person name="Loveland J.E."/>
            <person name="Lovell J.D."/>
            <person name="Lozado R."/>
            <person name="Lu J."/>
            <person name="Lyne R."/>
            <person name="Ma J."/>
            <person name="Maheshwari M."/>
            <person name="Matthews L.H."/>
            <person name="McDowall J."/>
            <person name="McLaren S."/>
            <person name="McMurray A."/>
            <person name="Meidl P."/>
            <person name="Meitinger T."/>
            <person name="Milne S."/>
            <person name="Miner G."/>
            <person name="Mistry S.L."/>
            <person name="Morgan M."/>
            <person name="Morris S."/>
            <person name="Mueller I."/>
            <person name="Mullikin J.C."/>
            <person name="Nguyen N."/>
            <person name="Nordsiek G."/>
            <person name="Nyakatura G."/>
            <person name="O'dell C.N."/>
            <person name="Okwuonu G."/>
            <person name="Palmer S."/>
            <person name="Pandian R."/>
            <person name="Parker D."/>
            <person name="Parrish J."/>
            <person name="Pasternak S."/>
            <person name="Patel D."/>
            <person name="Pearce A.V."/>
            <person name="Pearson D.M."/>
            <person name="Pelan S.E."/>
            <person name="Perez L."/>
            <person name="Porter K.M."/>
            <person name="Ramsey Y."/>
            <person name="Reichwald K."/>
            <person name="Rhodes S."/>
            <person name="Ridler K.A."/>
            <person name="Schlessinger D."/>
            <person name="Schueler M.G."/>
            <person name="Sehra H.K."/>
            <person name="Shaw-Smith C."/>
            <person name="Shen H."/>
            <person name="Sheridan E.M."/>
            <person name="Shownkeen R."/>
            <person name="Skuce C.D."/>
            <person name="Smith M.L."/>
            <person name="Sotheran E.C."/>
            <person name="Steingruber H.E."/>
            <person name="Steward C.A."/>
            <person name="Storey R."/>
            <person name="Swann R.M."/>
            <person name="Swarbreck D."/>
            <person name="Tabor P.E."/>
            <person name="Taudien S."/>
            <person name="Taylor T."/>
            <person name="Teague B."/>
            <person name="Thomas K."/>
            <person name="Thorpe A."/>
            <person name="Timms K."/>
            <person name="Tracey A."/>
            <person name="Trevanion S."/>
            <person name="Tromans A.C."/>
            <person name="d'Urso M."/>
            <person name="Verduzco D."/>
            <person name="Villasana D."/>
            <person name="Waldron L."/>
            <person name="Wall M."/>
            <person name="Wang Q."/>
            <person name="Warren J."/>
            <person name="Warry G.L."/>
            <person name="Wei X."/>
            <person name="West A."/>
            <person name="Whitehead S.L."/>
            <person name="Whiteley M.N."/>
            <person name="Wilkinson J.E."/>
            <person name="Willey D.L."/>
            <person name="Williams G."/>
            <person name="Williams L."/>
            <person name="Williamson A."/>
            <person name="Williamson H."/>
            <person name="Wilming L."/>
            <person name="Woodmansey R.L."/>
            <person name="Wray P.W."/>
            <person name="Yen J."/>
            <person name="Zhang J."/>
            <person name="Zhou J."/>
            <person name="Zoghbi H."/>
            <person name="Zorilla S."/>
            <person name="Buck D."/>
            <person name="Reinhardt R."/>
            <person name="Poustka A."/>
            <person name="Rosenthal A."/>
            <person name="Lehrach H."/>
            <person name="Meindl A."/>
            <person name="Minx P.J."/>
            <person name="Hillier L.W."/>
            <person name="Willard H.F."/>
            <person name="Wilson R.K."/>
            <person name="Waterston R.H."/>
            <person name="Rice C.M."/>
            <person name="Vaudin M."/>
            <person name="Coulson A."/>
            <person name="Nelson D.L."/>
            <person name="Weinstock G."/>
            <person name="Sulston J.E."/>
            <person name="Durbin R.M."/>
            <person name="Hubbard T."/>
            <person name="Gibbs R.A."/>
            <person name="Beck S."/>
            <person name="Rogers J."/>
            <person name="Bentley D.R."/>
        </authorList>
    </citation>
    <scope>NUCLEOTIDE SEQUENCE [LARGE SCALE GENOMIC DNA]</scope>
</reference>
<reference key="6">
    <citation type="submission" date="2005-09" db="EMBL/GenBank/DDBJ databases">
        <authorList>
            <person name="Mural R.J."/>
            <person name="Istrail S."/>
            <person name="Sutton G.G."/>
            <person name="Florea L."/>
            <person name="Halpern A.L."/>
            <person name="Mobarry C.M."/>
            <person name="Lippert R."/>
            <person name="Walenz B."/>
            <person name="Shatkay H."/>
            <person name="Dew I."/>
            <person name="Miller J.R."/>
            <person name="Flanigan M.J."/>
            <person name="Edwards N.J."/>
            <person name="Bolanos R."/>
            <person name="Fasulo D."/>
            <person name="Halldorsson B.V."/>
            <person name="Hannenhalli S."/>
            <person name="Turner R."/>
            <person name="Yooseph S."/>
            <person name="Lu F."/>
            <person name="Nusskern D.R."/>
            <person name="Shue B.C."/>
            <person name="Zheng X.H."/>
            <person name="Zhong F."/>
            <person name="Delcher A.L."/>
            <person name="Huson D.H."/>
            <person name="Kravitz S.A."/>
            <person name="Mouchard L."/>
            <person name="Reinert K."/>
            <person name="Remington K.A."/>
            <person name="Clark A.G."/>
            <person name="Waterman M.S."/>
            <person name="Eichler E.E."/>
            <person name="Adams M.D."/>
            <person name="Hunkapiller M.W."/>
            <person name="Myers E.W."/>
            <person name="Venter J.C."/>
        </authorList>
    </citation>
    <scope>NUCLEOTIDE SEQUENCE [LARGE SCALE GENOMIC DNA]</scope>
</reference>
<reference key="7">
    <citation type="journal article" date="2004" name="Genome Res.">
        <title>The status, quality, and expansion of the NIH full-length cDNA project: the Mammalian Gene Collection (MGC).</title>
        <authorList>
            <consortium name="The MGC Project Team"/>
        </authorList>
    </citation>
    <scope>NUCLEOTIDE SEQUENCE [LARGE SCALE MRNA] (ISOFORM 3)</scope>
    <source>
        <tissue>Skin</tissue>
    </source>
</reference>
<reference key="8">
    <citation type="journal article" date="1993" name="Hum. Mol. Genet.">
        <title>Determination of the organisation of coding sequences within the iduronate sulphate sulphatase (IDS) gene.</title>
        <authorList>
            <person name="Flomen R.H."/>
            <person name="Green E.P."/>
            <person name="Green P.M."/>
            <person name="Bentley D.R."/>
            <person name="Giannelli F."/>
        </authorList>
    </citation>
    <scope>NUCLEOTIDE SEQUENCE [GENOMIC DNA] OF 1-398</scope>
</reference>
<reference key="9">
    <citation type="journal article" date="1995" name="Biochem. J.">
        <title>Processing of iduronate 2-sulphatase in human fibroblasts.</title>
        <authorList>
            <person name="Froissart R."/>
            <person name="Millat G."/>
            <person name="Mathieu M."/>
            <person name="Bozon D."/>
            <person name="Maire I."/>
        </authorList>
    </citation>
    <scope>PROTEOLYTIC CLEAVAGE</scope>
    <scope>GLYCOSYLATION</scope>
</reference>
<reference key="10">
    <citation type="journal article" date="2009" name="J. Proteome Res.">
        <title>Glycoproteomics analysis of human liver tissue by combination of multiple enzyme digestion and hydrazide chemistry.</title>
        <authorList>
            <person name="Chen R."/>
            <person name="Jiang X."/>
            <person name="Sun D."/>
            <person name="Han G."/>
            <person name="Wang F."/>
            <person name="Ye M."/>
            <person name="Wang L."/>
            <person name="Zou H."/>
        </authorList>
    </citation>
    <scope>GLYCOSYLATION [LARGE SCALE ANALYSIS] AT ASN-115</scope>
    <source>
        <tissue>Liver</tissue>
    </source>
</reference>
<reference evidence="47" key="11">
    <citation type="journal article" date="2017" name="Nat. Commun.">
        <title>Insights into Hunter syndrome from the structure of iduronate-2-sulfatase.</title>
        <authorList>
            <person name="Demydchuk M."/>
            <person name="Hill C.H."/>
            <person name="Zhou A."/>
            <person name="Bunkoczi G."/>
            <person name="Stein P.E."/>
            <person name="Marchesan D."/>
            <person name="Deane J.E."/>
            <person name="Read R.J."/>
        </authorList>
    </citation>
    <scope>X-RAY CRYSTALLOGRAPHY (2.30 ANGSTROMS) OF 26-550 IN COMPLEX WITH CALCIUM</scope>
    <scope>GLYCOSYLATION AT ASN-115; ASN-144; ASN-246; ASN-280; ASN-325; ASN-513 AND ASN-537</scope>
    <scope>DISULFIDE BOND</scope>
    <scope>ACTIVE SITE</scope>
    <scope>SUBUNIT</scope>
    <scope>COFACTOR</scope>
    <scope>OXOALANINE AT CYS-84</scope>
    <scope>CATALYTIC ACTIVITY</scope>
    <scope>FUNCTION</scope>
</reference>
<reference evidence="48" key="12">
    <citation type="submission" date="2018-11" db="PDB data bank">
        <title>Structural insights of idursulfase beta.</title>
        <authorList>
            <person name="Kim H."/>
            <person name="Kim D."/>
            <person name="Hong J."/>
            <person name="Lee K."/>
            <person name="Seo J."/>
            <person name="Oh B.H."/>
        </authorList>
    </citation>
    <scope>X-RAY CRYSTALLOGRAPHY (3.10 ANGSTROMS) OF 34-550</scope>
</reference>
<reference key="13">
    <citation type="journal article" date="1992" name="Hum. Mol. Genet.">
        <title>Mutation analysis of the iduronate-2-sulfatase gene in patients with mucopolysaccharidosis type II (Hunter syndrome).</title>
        <authorList>
            <person name="Bunge S."/>
            <person name="Steglich C."/>
            <person name="Beck M."/>
            <person name="Rosenkranz W."/>
            <person name="Schwinger E."/>
            <person name="Hopwood J.J."/>
            <person name="Gal A."/>
        </authorList>
    </citation>
    <scope>VARIANTS MPS2 ARG-135 AND GLY-422</scope>
</reference>
<reference key="14">
    <citation type="journal article" date="1992" name="Hum. Mol. Genet.">
        <title>Mutation R468W of the iduronate-2-sulfatase gene in mild Hunter syndrome (mucopolysaccharidosis type II) confirmed by in vitro mutagenesis and expression.</title>
        <authorList>
            <person name="Crotti P.L."/>
            <person name="Bunge S."/>
            <person name="Anderson R.A."/>
            <person name="Whitley C.B."/>
        </authorList>
    </citation>
    <scope>VARIANT MPS2 TRP-468</scope>
</reference>
<reference key="15">
    <citation type="journal article" date="1993" name="Hum. Mol. Genet.">
        <title>Iduronate-2-sulfatase gene mutations in 16 patients with mucopolysaccharidosis type II (Hunter syndrome).</title>
        <authorList>
            <person name="Bunge S."/>
            <person name="Steglich C."/>
            <person name="Zuther C."/>
            <person name="Beck M."/>
            <person name="Morris C.P."/>
            <person name="Schwinger E."/>
            <person name="Schinzel A."/>
            <person name="Hopwood J.J."/>
            <person name="Gal A."/>
        </authorList>
    </citation>
    <scope>VARIANTS MPS2 ARG-86; ASP-94; ARG-120; PRO-221 AND GLY-422</scope>
</reference>
<reference key="16">
    <citation type="journal article" date="1993" name="Hum. Mutat.">
        <title>Molecular basis of mucopolysaccharidosis type II: mutations in the iduronate-2-sulphatase gene.</title>
        <authorList>
            <person name="Hopwood J.J."/>
            <person name="Bunge S."/>
            <person name="Morris C.P."/>
            <person name="Wilson P.J."/>
            <person name="Steglich C."/>
            <person name="Beck M."/>
            <person name="Schwinger E."/>
            <person name="Gal A."/>
        </authorList>
    </citation>
    <scope>VARIANT MPS2 HIS-120</scope>
</reference>
<reference key="17">
    <citation type="journal article" date="1994" name="Hum. Mutat.">
        <title>Mutations of the iduronate-2-sulfatase (IDS) gene in patients with Hunter syndrome (mucopolysaccharidosis II).</title>
        <authorList>
            <person name="Schroeder W."/>
            <person name="Wulff K."/>
            <person name="Wehnert M."/>
            <person name="Seidlitz G."/>
            <person name="Herrmann F.H."/>
        </authorList>
    </citation>
    <scope>VARIANTS MPS2 GLU-68; HIS-293; GLY-478 AND ARG-485</scope>
</reference>
<reference key="18">
    <citation type="journal article" date="1994" name="Hum. Mutat.">
        <title>Mutation analysis of Jewish Hunter patients in Israel.</title>
        <authorList>
            <person name="Ben-Simon-Schiff E."/>
            <person name="Bach G."/>
            <person name="Hopwood J.J."/>
            <person name="Abeliovich D."/>
        </authorList>
    </citation>
    <scope>VARIANT MPS2 PRO-410</scope>
</reference>
<reference key="19">
    <citation type="journal article" date="1995" name="Am. J. Hum. Genet.">
        <title>Molecular diagnosis of mucopolysaccharidosis type II (Hunter syndrome) by automated sequencing and computer-assisted interpretation: toward mutation mapping of the iduronate-2-sulfatase gene.</title>
        <authorList>
            <person name="Jonsson J.J."/>
            <person name="Aronovich E.L."/>
            <person name="Braun S.E."/>
            <person name="Whitley C.B."/>
        </authorList>
    </citation>
    <scope>VARIANTS MPS2 TRP-132; TYR-229; ARG-358; HIS-469 AND CYS-523</scope>
</reference>
<reference key="20">
    <citation type="journal article" date="1995" name="Hum. Mutat.">
        <title>Mutations of the iduronate-2-sulfatase gene in 12 Polish patients with mucopolysaccharidosis type II (Hunter syndrome).</title>
        <authorList>
            <person name="Popowska E."/>
            <person name="Rathmann M."/>
            <person name="Tylki-Szymanska A."/>
            <person name="Bunge S."/>
            <person name="Steglich C."/>
            <person name="Schwinger E."/>
            <person name="Gal A."/>
        </authorList>
    </citation>
    <scope>VARIANTS MPS2 LEU-86; ASN-87; PRO-92; ASN-135; CYS-345 AND TRP-468</scope>
</reference>
<reference key="21">
    <citation type="journal article" date="1995" name="Hum. Mutat.">
        <title>Mucopolysaccharidosis type II (Hunter disease): identification and characterization of eight point mutations in the iduronate-2-sulfatase gene in Japanese patients.</title>
        <authorList>
            <person name="Sukegawa K."/>
            <person name="Tomatsu S."/>
            <person name="Fukao T."/>
            <person name="Iwata H."/>
            <person name="Song X.-Q."/>
            <person name="Yamada Y."/>
            <person name="Fukuda S."/>
            <person name="Isogai K."/>
            <person name="Orii T."/>
        </authorList>
    </citation>
    <scope>VARIANTS MPS2 PRO-48; SER-117 DEL; LEU-333; ARG-337; LEU-468 AND GLN-468</scope>
</reference>
<reference key="22">
    <citation type="journal article" date="1995" name="Hum. Mutat.">
        <title>Mutations of the iduronate-2-sulfatase gene on a T146T background in three patients with Hunter syndrome.</title>
        <authorList>
            <person name="Li P."/>
            <person name="Huffman P."/>
            <person name="Thompson J.N."/>
        </authorList>
    </citation>
    <scope>VARIANT MPS2 VAL-346</scope>
</reference>
<reference key="23">
    <citation type="journal article" date="1996" name="Am. J. Hum. Genet.">
        <title>Mucopolysaccharidosis type II (Hunter syndrome): mutation 'hot spots' in the iduronate-2-sulfatase gene.</title>
        <authorList>
            <person name="Rathmann M."/>
            <person name="Bunge S."/>
            <person name="Beck M."/>
            <person name="Kresse H."/>
            <person name="Tylki-Szymanska A."/>
            <person name="Gal A."/>
        </authorList>
    </citation>
    <scope>VARIANTS MPS2 ASP-63; THR-85; GLN-86; CYS-88; HIS-88; CYS-108; SER-117 DEL; VAL-125; ARG-134; PHE-184; ASN-252; LEU-333; ILE-347; ARG-403 AND GLN-468</scope>
</reference>
<reference key="24">
    <citation type="journal article" date="1996" name="Hum. Genet.">
        <title>Mutations in the iduronate-2-sulfatase gene in five Norwegians with Hunter syndrome.</title>
        <authorList>
            <person name="Olsen T.C."/>
            <person name="Eiken H.G."/>
            <person name="Knappskog P.M."/>
            <person name="Kase B.F."/>
            <person name="Mansson J.-E."/>
            <person name="Boman H."/>
            <person name="Apold J."/>
        </authorList>
    </citation>
    <scope>VARIANTS MPS2 LEU-333 AND ASP-346</scope>
</reference>
<reference key="25">
    <citation type="journal article" date="1996" name="Hum. Mutat.">
        <title>Mutation analysis in 20 patients with Hunter disease.</title>
        <authorList>
            <person name="Goldenfum S.L."/>
            <person name="Young E."/>
            <person name="Michelakakis H."/>
            <person name="Tsagarakis S."/>
            <person name="Winchester B."/>
        </authorList>
    </citation>
    <scope>VARIANTS MPS2 ASP-63; ARG-86; GLY-95; PRO-205; TRP-468 AND GLN-468</scope>
</reference>
<reference key="26">
    <citation type="journal article" date="1996" name="J. Inherit. Metab. Dis.">
        <title>Detection of four novel mutations in the iduronate-2-sulphatase gene by single-strand conformation polymorphism analysis of genomic amplicons.</title>
        <authorList>
            <person name="Li P."/>
            <person name="Thompson J.N."/>
        </authorList>
    </citation>
    <scope>VARIANTS MPS2 LEU-333 AND GLY-334</scope>
</reference>
<reference key="27">
    <citation type="journal article" date="1997" name="Hum. Mutat.">
        <title>Mucopolysaccharidosis type II: identification of six novel mutations in Italian patients.</title>
        <authorList>
            <person name="Villani G.R.D."/>
            <person name="Balzano N."/>
            <person name="Grosso M."/>
            <person name="Salvadore F."/>
            <person name="Izzo P."/>
            <person name="di Natale P."/>
        </authorList>
    </citation>
    <scope>VARIANTS MPS2 ASP-63; THR-347; GLN-468 AND LEU-468</scope>
</reference>
<reference key="28">
    <citation type="journal article" date="1997" name="Hum. Mutat.">
        <title>Hunter disease in a girl caused by R468Q mutation in the iduronate-2-sulfatase gene and skewed inactivation of the X chromosome carrying the normal allele.</title>
        <authorList>
            <person name="Sukegawa K."/>
            <person name="Song X.-Q."/>
            <person name="Masuno M."/>
            <person name="Fukao T."/>
            <person name="Shimozawa N."/>
            <person name="Fukuda S."/>
            <person name="Isogai K."/>
            <person name="Nishio H."/>
            <person name="Matsuo M."/>
            <person name="Tomatsu S."/>
            <person name="Kondo N."/>
            <person name="Orii T."/>
        </authorList>
    </citation>
    <scope>VARIANT MPS2 GLN-468</scope>
</reference>
<reference key="29">
    <citation type="journal article" date="1997" name="J. Inherit. Metab. Dis.">
        <title>Molecular analysis in 23 Hunter disease families.</title>
        <authorList>
            <person name="Lissens W."/>
            <person name="Seneca S."/>
            <person name="Liebaers I."/>
        </authorList>
    </citation>
    <scope>VARIANTS MPS2 PHE-73; THR-118 DEL; HIS-121; TRP-132; ARG-336; LYS-341; GLN-347; TRP-468; GLN-468; LYS-521 AND VAL-521</scope>
</reference>
<reference key="30">
    <citation type="journal article" date="1998" name="Arch. Dis. Child.">
        <title>Mutation analysis in 57 unrelated patients with MPS II.</title>
        <authorList>
            <person name="Vafiadaki E."/>
            <person name="Cooper A."/>
            <person name="Heptinstall L.E."/>
            <person name="Hatton C.E."/>
            <person name="Thornley M."/>
            <person name="Wraith J.E."/>
        </authorList>
    </citation>
    <scope>VARIANTS MPS2 ASN-45; TYR-115; LEU-228; ARG-266; LYS-434; LYS-485 AND CYS-502</scope>
</reference>
<reference key="31">
    <citation type="journal article" date="1998" name="Clin. Genet.">
        <title>Identification of iduronate sulfatase gene alterations in 70 unrelated Hunter patients.</title>
        <authorList>
            <person name="Froissart R."/>
            <person name="Maire I."/>
            <person name="Millat G."/>
            <person name="Cudry S."/>
            <person name="Birot A.-M."/>
            <person name="Bonnet V."/>
            <person name="Bouton O."/>
            <person name="Bozon D."/>
        </authorList>
    </citation>
    <scope>VARIANTS MPS2 ASN-71; SER-85; THR-85; LEU-86; GLY-88; HIS-88; PHE-89; SER-108; SER-117 DEL; ILE-118; ARG-121; ASP-138; HIS-148; ARG-229; LEU-333; ASN-334; ARG-335; GLU-336; ARG-339; ARG-403; LEU-467; GLN-468; TRP-468; ARG-480; GLN-480; LEU-480 AND SER-490</scope>
</reference>
<reference key="32">
    <citation type="journal article" date="1998" name="Hum. Genet.">
        <title>Mutational spectrum of the iduronate-2-sulfatase (IDS) gene in 36 unrelated Russian MPS II patients.</title>
        <authorList>
            <person name="Karsten S."/>
            <person name="Voskoboeva E."/>
            <person name="Tishkanina S."/>
            <person name="Pettersson U."/>
            <person name="Krasnopolskaya X."/>
            <person name="Bondeson M.-L."/>
        </authorList>
    </citation>
    <scope>VARIANTS MPS2 ASP-54; ASP-63; GLU-79; CYS-88; LEU-88; HIS-88; ARG-102; PRO-159; SER-196; GLY-198; GLU-224; LEU-333; ASP-340; TYR-432; GLN-468; TYR-478 AND ARG-485</scope>
</reference>
<reference key="33">
    <citation type="journal article" date="1998" name="Hum. Mutat.">
        <title>Detection of four novel mutations in the iduronate-2-sulfatase gene.</title>
        <authorList>
            <person name="Balzano N."/>
            <person name="Villani G.R.D."/>
            <person name="Grosso M."/>
            <person name="Izzo P."/>
            <person name="di Natale P."/>
        </authorList>
    </citation>
    <scope>VARIANTS MPS2 LEU-86; HIS-88; PRO-88; ILE-118 AND HIS-266</scope>
</reference>
<reference key="34">
    <citation type="journal article" date="1998" name="Hum. Mutat. Suppl.">
        <title>Mutations in the iduronate-2-sulfatase gene in 12 Spanish patients with Hunter disease.</title>
        <authorList>
            <person name="Gort L."/>
            <person name="Coll M.J."/>
            <person name="Chabas A."/>
        </authorList>
    </citation>
    <scope>VARIANTS MPS2 THR-85; HIS-88; ILE-349 AND VAL-521</scope>
</reference>
<reference key="35">
    <citation type="journal article" date="1998" name="Hum. Mutat.">
        <title>Identification of 9 novel gene mutations in 19 unrelated Hunter syndrome (Mucopolysaccharidosis type II) patients.</title>
        <authorList>
            <person name="Karsten S.L."/>
            <person name="Voskoboeva E."/>
            <person name="Carlberg B.-M."/>
            <person name="Kleijer W.J."/>
            <person name="Toennesen T."/>
            <person name="Pettersson U."/>
            <person name="Bondeson M.-L."/>
        </authorList>
    </citation>
    <scope>VARIANTS MPS2 PHE-143; TRP-184; VAL-269 AND HIS-348</scope>
</reference>
<reference key="36">
    <citation type="journal article" date="1998" name="J. Inherit. Metab. Dis.">
        <title>Mutation analysis in the iduronate-2-sulphatase gene in 43 Japanese patients with mucopolysaccharidosis type II (Hunter disease).</title>
        <authorList>
            <person name="Isogai K."/>
            <person name="Sukegawa K."/>
            <person name="Tomatsu S."/>
            <person name="Fukao T."/>
            <person name="Song X.-Q."/>
            <person name="Yamada Y."/>
            <person name="Fukuda S."/>
            <person name="Orii T."/>
            <person name="Kondo N."/>
        </authorList>
    </citation>
    <scope>VARIANTS MPS2 PRO-48; THR-85; LEU-86; PRO-182; SER-196; ASP-225; MET-227; ASN-308; PRO-314; LEU-333; ARG-337; ILE-349; GLN-468; LEU-468 AND TRP-468</scope>
</reference>
<reference key="37">
    <citation type="journal article" date="1998" name="J. Inherit. Metab. Dis.">
        <title>Hunter disease in the Spanish population: molecular analysis in 31 families.</title>
        <authorList>
            <person name="Gort L."/>
            <person name="Chabas A."/>
            <person name="Coll M.J."/>
        </authorList>
    </citation>
    <scope>VARIANTS MPS2 THR-228; ARG-229; LEU-231; GLU-308; ALA-309 AND CYS-313</scope>
</reference>
<reference key="38">
    <citation type="journal article" date="1999" name="Hum. Mutat.">
        <title>Identification of 6 new mutations in the iduronate sulfatase gene.</title>
        <authorList>
            <person name="Vallance H.D."/>
            <person name="Bernard L."/>
            <person name="Rashed M."/>
            <person name="Chiu D."/>
            <person name="Le G."/>
            <person name="Toone J."/>
            <person name="Applegarth D.A."/>
            <person name="Coulter-Mackie M."/>
        </authorList>
    </citation>
    <scope>VARIANTS MPS2 PHE-143; LYS-341; TYR-342 AND PHE-491</scope>
</reference>
<reference key="39">
    <citation type="journal article" date="1999" name="Hum. Mutat.">
        <title>Mutation analysis of iduronate-2-sulphatase gene in 24 patients with Hunter syndrome: characterisation of 6 novel mutations.</title>
        <authorList>
            <person name="Hartog C."/>
            <person name="Fryer A."/>
            <person name="Upadhyaya M."/>
        </authorList>
    </citation>
    <scope>VARIANTS MPS2 ASN-264; PRO-465 AND TRP-468</scope>
</reference>
<reference key="40">
    <citation type="journal article" date="1999" name="J. Med. Genet.">
        <title>Molecular basis of iduronate-2-sulphatase gene mutations in patients with mucopolysaccharidosis type II (Hunter syndrome).</title>
        <authorList>
            <person name="Li P."/>
            <person name="Bellows A.B."/>
            <person name="Thompson J.N."/>
        </authorList>
    </citation>
    <scope>VARIANTS MPS2 ARG-71; GLU-82; THR-85; CYS-88; ARG-95 DEL; GLN-468; TRP-468 AND VAL-521</scope>
</reference>
<reference key="41">
    <citation type="journal article" date="2000" name="Biochim. Biophys. Acta">
        <title>Expression of five iduronate-2-sulfatase site-directed mutations.</title>
        <authorList>
            <person name="Villani G.R.D."/>
            <person name="Daniele A."/>
            <person name="Balzano N."/>
            <person name="Di Natale P."/>
        </authorList>
    </citation>
    <scope>CHARACTERIZATION OF VARIANTS MPS2 HIS-88; PRO-88; ILE-118 AND GLN-468</scope>
    <scope>CATALYTIC ACTIVITY</scope>
    <scope>FUNCTION</scope>
    <scope>BIOPHYSICOCHEMICAL PROPERTIES</scope>
    <scope>SUBCELLULAR LOCATION</scope>
</reference>
<reference key="42">
    <citation type="journal article" date="2000" name="J. Med. Genet.">
        <title>MPS II in females: molecular basis of two different cases.</title>
        <authorList>
            <person name="Cudry S."/>
            <person name="Tigaud I."/>
            <person name="Froissart R."/>
            <person name="Bonnet V."/>
            <person name="Maire I."/>
            <person name="Bozon D."/>
        </authorList>
    </citation>
    <scope>VARIANT MPS2 PRO-41</scope>
    <scope>CHARACTERIZATION OF VARIANT MPS2 PRO-41</scope>
</reference>
<reference key="43">
    <citation type="journal article" date="2001" name="Biochim. Biophys. Acta">
        <title>The effect of four mutations on the expression of iduronate-2-sulfatase in mucopolysaccharidosis type II.</title>
        <authorList>
            <person name="Bonuccelli G."/>
            <person name="Di Natale P."/>
            <person name="Corsolini F."/>
            <person name="Villani G."/>
            <person name="Regis S."/>
            <person name="Filocamo M."/>
        </authorList>
    </citation>
    <scope>VARIANTS MPS2 SER-117 DEL; ILE-265 AND THR-347</scope>
    <scope>CHARACTERIZATION OF VARIANTS MPS2 SER-117 DEL; ILE-265 AND THR-347</scope>
    <scope>CATALYTIC ACTIVITY</scope>
    <scope>FUNCTION</scope>
</reference>
<reference key="44">
    <citation type="journal article" date="2001" name="Clin. Genet.">
        <title>Molecular basis of mucopolysaccharidosis type II in Portugal: identification of four novel mutations.</title>
        <authorList>
            <person name="Moreira da Silva I."/>
            <person name="Froissart R."/>
            <person name="Marques dos Santos H."/>
            <person name="Caseiro C."/>
            <person name="Maire I."/>
            <person name="Bozon D."/>
        </authorList>
    </citation>
    <scope>VARIANTS MPS2 CYS-88; THR-95; ILE-181; ARG-422; LEU-467; GLN-468 AND TRP-468</scope>
</reference>
<reference key="45">
    <citation type="journal article" date="2003" name="Am. J. Med. Genet. A">
        <title>Expression studies of two novel in CIS-mutations identified in an intermediate case of Hunter syndrome.</title>
        <authorList>
            <person name="Ricci V."/>
            <person name="Filocamo M."/>
            <person name="Regis S."/>
            <person name="Corsolini F."/>
            <person name="Stroppiano M."/>
            <person name="Di Duca M."/>
            <person name="Gatti R."/>
        </authorList>
    </citation>
    <scope>VARIANT MPS2 488-MET-GLY-489 DELINS ILE-ALA</scope>
    <scope>CHARACTERIZATION OF VARIANT MPS2 488-MET-GLY-489 DELINS ILE-ALA</scope>
</reference>
<reference key="46">
    <citation type="journal article" date="2003" name="Hum. Mutat.">
        <title>Mutational spectrum of the iduronate 2 sulfatase gene in 25 unrelated Korean Hunter syndrome patients: identification of 13 novel mutations.</title>
        <authorList>
            <person name="Kim C.H."/>
            <person name="Hwang H.Z."/>
            <person name="Song S.M."/>
            <person name="Paik K.H."/>
            <person name="Kwon E.K."/>
            <person name="Moon K.B."/>
            <person name="Yoon J.H."/>
            <person name="Han C.K."/>
            <person name="Jin D.-K."/>
        </authorList>
    </citation>
    <scope>VARIANTS MPS2 LEU-41 DEL; TYR-117; PRO-259 AND ILE-299</scope>
</reference>
<reference key="47">
    <citation type="journal article" date="2006" name="J. Mol. Med.">
        <title>Multiple cryptic splice sites can be activated by IDS point mutations generating misspliced transcripts.</title>
        <authorList>
            <person name="Lualdi S."/>
            <person name="Pittis M.G."/>
            <person name="Regis S."/>
            <person name="Parini R."/>
            <person name="Allegri A.E."/>
            <person name="Furlan F."/>
            <person name="Bembi B."/>
            <person name="Filocamo M."/>
        </authorList>
    </citation>
    <scope>VARIANTS MPS2 VAL-82 AND VAL-140</scope>
    <scope>CHARACTERIZATION OF VARIANTS MPS2 VAL-82 AND VAL-140</scope>
</reference>
<reference key="48">
    <citation type="journal article" date="2014" name="J. Genet. Genomics">
        <title>Genetic analysis of 17 children with Hunter syndrome: identification and functional characterization of four novel mutations in the iduronate-2-sulfatase gene.</title>
        <authorList>
            <person name="Chistiakov D.A."/>
            <person name="Kuzenkova L.M."/>
            <person name="Savost'anov K.V."/>
            <person name="Gevorkyan A.K."/>
            <person name="Pushkov A.A."/>
            <person name="Nikitin A.G."/>
            <person name="Vashakmadze N.D."/>
            <person name="Zhurkova N.V."/>
            <person name="Podkletnova T.V."/>
            <person name="Namazova-Baranova L.S."/>
            <person name="Baranov A.A."/>
        </authorList>
    </citation>
    <scope>VARIANT MPS2 GLY-468</scope>
</reference>
<accession>P22304</accession>
<accession>D3DWT4</accession>
<accession>Q14604</accession>
<accession>Q9BRM3</accession>
<proteinExistence type="evidence at protein level"/>
<dbReference type="EC" id="3.1.6.13" evidence="7 10 19"/>
<dbReference type="EMBL" id="M58342">
    <property type="protein sequence ID" value="AAA63197.1"/>
    <property type="molecule type" value="mRNA"/>
</dbReference>
<dbReference type="EMBL" id="L13329">
    <property type="protein sequence ID" value="AAA16877.1"/>
    <property type="molecule type" value="Genomic_DNA"/>
</dbReference>
<dbReference type="EMBL" id="L13321">
    <property type="protein sequence ID" value="AAA16877.1"/>
    <property type="status" value="JOINED"/>
    <property type="molecule type" value="Genomic_DNA"/>
</dbReference>
<dbReference type="EMBL" id="L13322">
    <property type="protein sequence ID" value="AAA16877.1"/>
    <property type="status" value="JOINED"/>
    <property type="molecule type" value="Genomic_DNA"/>
</dbReference>
<dbReference type="EMBL" id="L13323">
    <property type="protein sequence ID" value="AAA16877.1"/>
    <property type="status" value="JOINED"/>
    <property type="molecule type" value="Genomic_DNA"/>
</dbReference>
<dbReference type="EMBL" id="L13324">
    <property type="protein sequence ID" value="AAA16877.1"/>
    <property type="status" value="JOINED"/>
    <property type="molecule type" value="Genomic_DNA"/>
</dbReference>
<dbReference type="EMBL" id="L13325">
    <property type="protein sequence ID" value="AAA16877.1"/>
    <property type="status" value="JOINED"/>
    <property type="molecule type" value="Genomic_DNA"/>
</dbReference>
<dbReference type="EMBL" id="L13326">
    <property type="protein sequence ID" value="AAA16877.1"/>
    <property type="status" value="JOINED"/>
    <property type="molecule type" value="Genomic_DNA"/>
</dbReference>
<dbReference type="EMBL" id="L13327">
    <property type="protein sequence ID" value="AAA16877.1"/>
    <property type="status" value="JOINED"/>
    <property type="molecule type" value="Genomic_DNA"/>
</dbReference>
<dbReference type="EMBL" id="L13328">
    <property type="protein sequence ID" value="AAA16877.1"/>
    <property type="status" value="JOINED"/>
    <property type="molecule type" value="Genomic_DNA"/>
</dbReference>
<dbReference type="EMBL" id="L04586">
    <property type="protein sequence ID" value="AAA59192.1"/>
    <property type="molecule type" value="Genomic_DNA"/>
</dbReference>
<dbReference type="EMBL" id="L04578">
    <property type="protein sequence ID" value="AAA59192.1"/>
    <property type="status" value="JOINED"/>
    <property type="molecule type" value="Genomic_DNA"/>
</dbReference>
<dbReference type="EMBL" id="L04579">
    <property type="protein sequence ID" value="AAA59192.1"/>
    <property type="status" value="JOINED"/>
    <property type="molecule type" value="Genomic_DNA"/>
</dbReference>
<dbReference type="EMBL" id="L04580">
    <property type="protein sequence ID" value="AAA59192.1"/>
    <property type="status" value="JOINED"/>
    <property type="molecule type" value="Genomic_DNA"/>
</dbReference>
<dbReference type="EMBL" id="L04581">
    <property type="protein sequence ID" value="AAA59192.1"/>
    <property type="status" value="JOINED"/>
    <property type="molecule type" value="Genomic_DNA"/>
</dbReference>
<dbReference type="EMBL" id="L04583">
    <property type="protein sequence ID" value="AAA59192.1"/>
    <property type="status" value="JOINED"/>
    <property type="molecule type" value="Genomic_DNA"/>
</dbReference>
<dbReference type="EMBL" id="L04582">
    <property type="protein sequence ID" value="AAA59192.1"/>
    <property type="status" value="JOINED"/>
    <property type="molecule type" value="Genomic_DNA"/>
</dbReference>
<dbReference type="EMBL" id="L04584">
    <property type="protein sequence ID" value="AAA59192.1"/>
    <property type="status" value="JOINED"/>
    <property type="molecule type" value="Genomic_DNA"/>
</dbReference>
<dbReference type="EMBL" id="L04585">
    <property type="protein sequence ID" value="AAA59192.1"/>
    <property type="status" value="JOINED"/>
    <property type="molecule type" value="Genomic_DNA"/>
</dbReference>
<dbReference type="EMBL" id="L40586">
    <property type="protein sequence ID" value="AAA92014.1"/>
    <property type="molecule type" value="mRNA"/>
</dbReference>
<dbReference type="EMBL" id="AC233288">
    <property type="status" value="NOT_ANNOTATED_CDS"/>
    <property type="molecule type" value="Genomic_DNA"/>
</dbReference>
<dbReference type="EMBL" id="CH471171">
    <property type="protein sequence ID" value="EAW61282.1"/>
    <property type="molecule type" value="Genomic_DNA"/>
</dbReference>
<dbReference type="EMBL" id="CH471171">
    <property type="protein sequence ID" value="EAW61281.1"/>
    <property type="molecule type" value="Genomic_DNA"/>
</dbReference>
<dbReference type="EMBL" id="CH471171">
    <property type="protein sequence ID" value="EAW61283.1"/>
    <property type="molecule type" value="Genomic_DNA"/>
</dbReference>
<dbReference type="EMBL" id="BC006170">
    <property type="protein sequence ID" value="AAH06170.1"/>
    <property type="molecule type" value="mRNA"/>
</dbReference>
<dbReference type="EMBL" id="AF011889">
    <property type="protein sequence ID" value="AAC77828.1"/>
    <property type="molecule type" value="Genomic_DNA"/>
</dbReference>
<dbReference type="CCDS" id="CCDS14685.1">
    <molecule id="P22304-1"/>
</dbReference>
<dbReference type="CCDS" id="CCDS14686.1">
    <molecule id="P22304-2"/>
</dbReference>
<dbReference type="PIR" id="A47535">
    <property type="entry name" value="KJHUID"/>
</dbReference>
<dbReference type="RefSeq" id="NP_000193.1">
    <molecule id="P22304-1"/>
    <property type="nucleotide sequence ID" value="NM_000202.8"/>
</dbReference>
<dbReference type="RefSeq" id="NP_001160022.1">
    <property type="nucleotide sequence ID" value="NM_001166550.3"/>
</dbReference>
<dbReference type="RefSeq" id="NP_006114.1">
    <molecule id="P22304-2"/>
    <property type="nucleotide sequence ID" value="NM_006123.5"/>
</dbReference>
<dbReference type="PDB" id="5FQL">
    <property type="method" value="X-ray"/>
    <property type="resolution" value="2.30 A"/>
    <property type="chains" value="A=26-550"/>
</dbReference>
<dbReference type="PDB" id="6IOZ">
    <property type="method" value="X-ray"/>
    <property type="resolution" value="3.10 A"/>
    <property type="chains" value="A=34-550"/>
</dbReference>
<dbReference type="PDBsum" id="5FQL"/>
<dbReference type="PDBsum" id="6IOZ"/>
<dbReference type="SMR" id="P22304"/>
<dbReference type="BioGRID" id="109649">
    <property type="interactions" value="148"/>
</dbReference>
<dbReference type="FunCoup" id="P22304">
    <property type="interactions" value="555"/>
</dbReference>
<dbReference type="IntAct" id="P22304">
    <property type="interactions" value="118"/>
</dbReference>
<dbReference type="MINT" id="P22304"/>
<dbReference type="STRING" id="9606.ENSP00000339801"/>
<dbReference type="DrugBank" id="DB09301">
    <property type="generic name" value="Chondroitin sulfate"/>
</dbReference>
<dbReference type="Allergome" id="9623">
    <property type="allergen name" value="Hom s Idursulfase"/>
</dbReference>
<dbReference type="GlyCosmos" id="P22304">
    <property type="glycosylation" value="7 sites, No reported glycans"/>
</dbReference>
<dbReference type="GlyGen" id="P22304">
    <property type="glycosylation" value="10 sites, 8 N-linked glycans (2 sites), 1 O-linked glycan (1 site)"/>
</dbReference>
<dbReference type="iPTMnet" id="P22304"/>
<dbReference type="PhosphoSitePlus" id="P22304"/>
<dbReference type="BioMuta" id="IDS"/>
<dbReference type="DMDM" id="124174"/>
<dbReference type="jPOST" id="P22304"/>
<dbReference type="MassIVE" id="P22304"/>
<dbReference type="PaxDb" id="9606-ENSP00000339801"/>
<dbReference type="PeptideAtlas" id="P22304"/>
<dbReference type="ProteomicsDB" id="53975">
    <molecule id="P22304-1"/>
</dbReference>
<dbReference type="ProteomicsDB" id="53976">
    <molecule id="P22304-2"/>
</dbReference>
<dbReference type="ProteomicsDB" id="53977">
    <molecule id="P22304-3"/>
</dbReference>
<dbReference type="TopDownProteomics" id="P22304-3">
    <molecule id="P22304-3"/>
</dbReference>
<dbReference type="Antibodypedia" id="35279">
    <property type="antibodies" value="324 antibodies from 33 providers"/>
</dbReference>
<dbReference type="DNASU" id="3423"/>
<dbReference type="Ensembl" id="ENST00000340855.11">
    <molecule id="P22304-1"/>
    <property type="protein sequence ID" value="ENSP00000339801.6"/>
    <property type="gene ID" value="ENSG00000010404.18"/>
</dbReference>
<dbReference type="Ensembl" id="ENST00000370441.8">
    <molecule id="P22304-2"/>
    <property type="protein sequence ID" value="ENSP00000359470.4"/>
    <property type="gene ID" value="ENSG00000010404.18"/>
</dbReference>
<dbReference type="Ensembl" id="ENST00000466323.5">
    <molecule id="P22304-3"/>
    <property type="protein sequence ID" value="ENSP00000418264.1"/>
    <property type="gene ID" value="ENSG00000010404.18"/>
</dbReference>
<dbReference type="GeneID" id="3423"/>
<dbReference type="KEGG" id="hsa:3423"/>
<dbReference type="MANE-Select" id="ENST00000340855.11">
    <property type="protein sequence ID" value="ENSP00000339801.6"/>
    <property type="RefSeq nucleotide sequence ID" value="NM_000202.8"/>
    <property type="RefSeq protein sequence ID" value="NP_000193.1"/>
</dbReference>
<dbReference type="UCSC" id="uc011mxe.3">
    <molecule id="P22304-1"/>
    <property type="organism name" value="human"/>
</dbReference>
<dbReference type="AGR" id="HGNC:5389"/>
<dbReference type="CTD" id="3423"/>
<dbReference type="DisGeNET" id="3423"/>
<dbReference type="GeneCards" id="IDS"/>
<dbReference type="GeneReviews" id="IDS"/>
<dbReference type="HGNC" id="HGNC:5389">
    <property type="gene designation" value="IDS"/>
</dbReference>
<dbReference type="HPA" id="ENSG00000010404">
    <property type="expression patterns" value="Tissue enriched (brain)"/>
</dbReference>
<dbReference type="MalaCards" id="IDS"/>
<dbReference type="MIM" id="300823">
    <property type="type" value="gene"/>
</dbReference>
<dbReference type="MIM" id="309900">
    <property type="type" value="phenotype"/>
</dbReference>
<dbReference type="neXtProt" id="NX_P22304"/>
<dbReference type="OpenTargets" id="ENSG00000010404"/>
<dbReference type="Orphanet" id="217093">
    <property type="disease" value="Mucopolysaccharidosis type 2, attenuated form"/>
</dbReference>
<dbReference type="Orphanet" id="217085">
    <property type="disease" value="Mucopolysaccharidosis type 2, severe form"/>
</dbReference>
<dbReference type="PharmGKB" id="PA29636"/>
<dbReference type="VEuPathDB" id="HostDB:ENSG00000010404"/>
<dbReference type="eggNOG" id="KOG3867">
    <property type="taxonomic scope" value="Eukaryota"/>
</dbReference>
<dbReference type="GeneTree" id="ENSGT00940000156803"/>
<dbReference type="HOGENOM" id="CLU_006332_9_0_1"/>
<dbReference type="InParanoid" id="P22304"/>
<dbReference type="OMA" id="HVFTRAY"/>
<dbReference type="OrthoDB" id="96314at2759"/>
<dbReference type="PAN-GO" id="P22304">
    <property type="GO annotations" value="2 GO annotations based on evolutionary models"/>
</dbReference>
<dbReference type="PhylomeDB" id="P22304"/>
<dbReference type="TreeFam" id="TF323156"/>
<dbReference type="BioCyc" id="MetaCyc:HS00286-MONOMER"/>
<dbReference type="BRENDA" id="3.1.6.13">
    <property type="organism ID" value="2681"/>
</dbReference>
<dbReference type="PathwayCommons" id="P22304"/>
<dbReference type="Reactome" id="R-HSA-2024096">
    <property type="pathway name" value="HS-GAG degradation"/>
</dbReference>
<dbReference type="Reactome" id="R-HSA-2024101">
    <property type="pathway name" value="CS/DS degradation"/>
</dbReference>
<dbReference type="Reactome" id="R-HSA-2206296">
    <property type="pathway name" value="MPS II - Hunter syndrome"/>
</dbReference>
<dbReference type="SABIO-RK" id="P22304"/>
<dbReference type="SignaLink" id="P22304"/>
<dbReference type="BioGRID-ORCS" id="3423">
    <property type="hits" value="5 hits in 776 CRISPR screens"/>
</dbReference>
<dbReference type="ChiTaRS" id="IDS">
    <property type="organism name" value="human"/>
</dbReference>
<dbReference type="GeneWiki" id="Iduronate-2-sulfatase"/>
<dbReference type="GenomeRNAi" id="3423"/>
<dbReference type="Pharos" id="P22304">
    <property type="development level" value="Tbio"/>
</dbReference>
<dbReference type="PRO" id="PR:P22304"/>
<dbReference type="Proteomes" id="UP000005640">
    <property type="component" value="Chromosome X"/>
</dbReference>
<dbReference type="RNAct" id="P22304">
    <property type="molecule type" value="protein"/>
</dbReference>
<dbReference type="Bgee" id="ENSG00000010404">
    <property type="expression patterns" value="Expressed in right frontal lobe and 165 other cell types or tissues"/>
</dbReference>
<dbReference type="ExpressionAtlas" id="P22304">
    <property type="expression patterns" value="baseline and differential"/>
</dbReference>
<dbReference type="GO" id="GO:0005737">
    <property type="term" value="C:cytoplasm"/>
    <property type="evidence" value="ECO:0000318"/>
    <property type="project" value="GO_Central"/>
</dbReference>
<dbReference type="GO" id="GO:0043202">
    <property type="term" value="C:lysosomal lumen"/>
    <property type="evidence" value="ECO:0000304"/>
    <property type="project" value="Reactome"/>
</dbReference>
<dbReference type="GO" id="GO:0005764">
    <property type="term" value="C:lysosome"/>
    <property type="evidence" value="ECO:0000314"/>
    <property type="project" value="UniProtKB"/>
</dbReference>
<dbReference type="GO" id="GO:0005509">
    <property type="term" value="F:calcium ion binding"/>
    <property type="evidence" value="ECO:0000314"/>
    <property type="project" value="UniProtKB"/>
</dbReference>
<dbReference type="GO" id="GO:0004423">
    <property type="term" value="F:iduronate-2-sulfatase activity"/>
    <property type="evidence" value="ECO:0000314"/>
    <property type="project" value="UniProtKB"/>
</dbReference>
<dbReference type="GO" id="GO:0030209">
    <property type="term" value="P:dermatan sulfate proteoglycan catabolic process"/>
    <property type="evidence" value="ECO:0007669"/>
    <property type="project" value="Ensembl"/>
</dbReference>
<dbReference type="GO" id="GO:0006027">
    <property type="term" value="P:glycosaminoglycan catabolic process"/>
    <property type="evidence" value="ECO:0000314"/>
    <property type="project" value="UniProtKB"/>
</dbReference>
<dbReference type="GO" id="GO:0030200">
    <property type="term" value="P:heparan sulfate proteoglycan catabolic process"/>
    <property type="evidence" value="ECO:0007669"/>
    <property type="project" value="Ensembl"/>
</dbReference>
<dbReference type="CDD" id="cd16030">
    <property type="entry name" value="iduronate-2-sulfatase"/>
    <property type="match status" value="1"/>
</dbReference>
<dbReference type="FunFam" id="3.40.720.10:FF:000027">
    <property type="entry name" value="iduronate 2-sulfatase"/>
    <property type="match status" value="1"/>
</dbReference>
<dbReference type="Gene3D" id="3.40.720.10">
    <property type="entry name" value="Alkaline Phosphatase, subunit A"/>
    <property type="match status" value="1"/>
</dbReference>
<dbReference type="InterPro" id="IPR017850">
    <property type="entry name" value="Alkaline_phosphatase_core_sf"/>
</dbReference>
<dbReference type="InterPro" id="IPR035874">
    <property type="entry name" value="IDS"/>
</dbReference>
<dbReference type="InterPro" id="IPR024607">
    <property type="entry name" value="Sulfatase_CS"/>
</dbReference>
<dbReference type="InterPro" id="IPR000917">
    <property type="entry name" value="Sulfatase_N"/>
</dbReference>
<dbReference type="PANTHER" id="PTHR45953">
    <property type="entry name" value="IDURONATE 2-SULFATASE"/>
    <property type="match status" value="1"/>
</dbReference>
<dbReference type="PANTHER" id="PTHR45953:SF1">
    <property type="entry name" value="IDURONATE 2-SULFATASE"/>
    <property type="match status" value="1"/>
</dbReference>
<dbReference type="Pfam" id="PF00884">
    <property type="entry name" value="Sulfatase"/>
    <property type="match status" value="1"/>
</dbReference>
<dbReference type="SUPFAM" id="SSF53649">
    <property type="entry name" value="Alkaline phosphatase-like"/>
    <property type="match status" value="1"/>
</dbReference>
<dbReference type="PROSITE" id="PS00523">
    <property type="entry name" value="SULFATASE_1"/>
    <property type="match status" value="1"/>
</dbReference>
<dbReference type="PROSITE" id="PS00149">
    <property type="entry name" value="SULFATASE_2"/>
    <property type="match status" value="1"/>
</dbReference>
<evidence type="ECO:0000250" key="1">
    <source>
        <dbReference type="UniProtKB" id="P15289"/>
    </source>
</evidence>
<evidence type="ECO:0000255" key="2"/>
<evidence type="ECO:0000269" key="3">
    <source>
    </source>
</evidence>
<evidence type="ECO:0000269" key="4">
    <source>
    </source>
</evidence>
<evidence type="ECO:0000269" key="5">
    <source>
    </source>
</evidence>
<evidence type="ECO:0000269" key="6">
    <source>
    </source>
</evidence>
<evidence type="ECO:0000269" key="7">
    <source>
    </source>
</evidence>
<evidence type="ECO:0000269" key="8">
    <source>
    </source>
</evidence>
<evidence type="ECO:0000269" key="9">
    <source>
    </source>
</evidence>
<evidence type="ECO:0000269" key="10">
    <source>
    </source>
</evidence>
<evidence type="ECO:0000269" key="11">
    <source>
    </source>
</evidence>
<evidence type="ECO:0000269" key="12">
    <source>
    </source>
</evidence>
<evidence type="ECO:0000269" key="13">
    <source>
    </source>
</evidence>
<evidence type="ECO:0000269" key="14">
    <source>
    </source>
</evidence>
<evidence type="ECO:0000269" key="15">
    <source>
    </source>
</evidence>
<evidence type="ECO:0000269" key="16">
    <source>
    </source>
</evidence>
<evidence type="ECO:0000269" key="17">
    <source>
    </source>
</evidence>
<evidence type="ECO:0000269" key="18">
    <source>
    </source>
</evidence>
<evidence type="ECO:0000269" key="19">
    <source>
    </source>
</evidence>
<evidence type="ECO:0000269" key="20">
    <source>
    </source>
</evidence>
<evidence type="ECO:0000269" key="21">
    <source>
    </source>
</evidence>
<evidence type="ECO:0000269" key="22">
    <source>
    </source>
</evidence>
<evidence type="ECO:0000269" key="23">
    <source>
    </source>
</evidence>
<evidence type="ECO:0000269" key="24">
    <source>
    </source>
</evidence>
<evidence type="ECO:0000269" key="25">
    <source>
    </source>
</evidence>
<evidence type="ECO:0000269" key="26">
    <source>
    </source>
</evidence>
<evidence type="ECO:0000269" key="27">
    <source>
    </source>
</evidence>
<evidence type="ECO:0000269" key="28">
    <source>
    </source>
</evidence>
<evidence type="ECO:0000269" key="29">
    <source>
    </source>
</evidence>
<evidence type="ECO:0000269" key="30">
    <source>
    </source>
</evidence>
<evidence type="ECO:0000269" key="31">
    <source>
    </source>
</evidence>
<evidence type="ECO:0000269" key="32">
    <source>
    </source>
</evidence>
<evidence type="ECO:0000269" key="33">
    <source>
    </source>
</evidence>
<evidence type="ECO:0000269" key="34">
    <source>
    </source>
</evidence>
<evidence type="ECO:0000269" key="35">
    <source>
    </source>
</evidence>
<evidence type="ECO:0000269" key="36">
    <source>
    </source>
</evidence>
<evidence type="ECO:0000269" key="37">
    <source>
    </source>
</evidence>
<evidence type="ECO:0000269" key="38">
    <source>
    </source>
</evidence>
<evidence type="ECO:0000269" key="39">
    <source>
    </source>
</evidence>
<evidence type="ECO:0000269" key="40">
    <source>
    </source>
</evidence>
<evidence type="ECO:0000269" key="41">
    <source>
    </source>
</evidence>
<evidence type="ECO:0000269" key="42">
    <source>
    </source>
</evidence>
<evidence type="ECO:0000269" key="43">
    <source ref="12"/>
</evidence>
<evidence type="ECO:0000303" key="44">
    <source>
    </source>
</evidence>
<evidence type="ECO:0000303" key="45">
    <source>
    </source>
</evidence>
<evidence type="ECO:0000305" key="46"/>
<evidence type="ECO:0007744" key="47">
    <source>
        <dbReference type="PDB" id="5FQL"/>
    </source>
</evidence>
<evidence type="ECO:0007744" key="48">
    <source>
        <dbReference type="PDB" id="6IOZ"/>
    </source>
</evidence>
<evidence type="ECO:0007829" key="49">
    <source>
        <dbReference type="PDB" id="5FQL"/>
    </source>
</evidence>
<evidence type="ECO:0007829" key="50">
    <source>
        <dbReference type="PDB" id="6IOZ"/>
    </source>
</evidence>
<protein>
    <recommendedName>
        <fullName>Iduronate 2-sulfatase</fullName>
        <ecNumber evidence="7 10 19">3.1.6.13</ecNumber>
    </recommendedName>
    <alternativeName>
        <fullName>Alpha-L-iduronate sulfate sulfatase</fullName>
        <shortName>Idursulfase</shortName>
    </alternativeName>
    <component>
        <recommendedName>
            <fullName>Iduronate 2-sulfatase 42 kDa chain</fullName>
        </recommendedName>
    </component>
    <component>
        <recommendedName>
            <fullName>Iduronate 2-sulfatase 14 kDa chain</fullName>
        </recommendedName>
    </component>
</protein>
<keyword id="KW-0002">3D-structure</keyword>
<keyword id="KW-0025">Alternative splicing</keyword>
<keyword id="KW-0106">Calcium</keyword>
<keyword id="KW-0903">Direct protein sequencing</keyword>
<keyword id="KW-0225">Disease variant</keyword>
<keyword id="KW-1015">Disulfide bond</keyword>
<keyword id="KW-0325">Glycoprotein</keyword>
<keyword id="KW-0378">Hydrolase</keyword>
<keyword id="KW-0458">Lysosome</keyword>
<keyword id="KW-0479">Metal-binding</keyword>
<keyword id="KW-0510">Mucopolysaccharidosis</keyword>
<keyword id="KW-1267">Proteomics identification</keyword>
<keyword id="KW-1185">Reference proteome</keyword>
<keyword id="KW-0732">Signal</keyword>
<keyword id="KW-0865">Zymogen</keyword>
<gene>
    <name type="primary">IDS</name>
    <name type="synonym">SIDS</name>
</gene>